<evidence type="ECO:0000250" key="1"/>
<evidence type="ECO:0000250" key="2">
    <source>
        <dbReference type="UniProtKB" id="Q62312"/>
    </source>
</evidence>
<evidence type="ECO:0000255" key="3"/>
<evidence type="ECO:0000255" key="4">
    <source>
        <dbReference type="PROSITE-ProRule" id="PRU00159"/>
    </source>
</evidence>
<evidence type="ECO:0000255" key="5">
    <source>
        <dbReference type="PROSITE-ProRule" id="PRU10027"/>
    </source>
</evidence>
<evidence type="ECO:0000269" key="6">
    <source>
    </source>
</evidence>
<evidence type="ECO:0000269" key="7">
    <source>
    </source>
</evidence>
<evidence type="ECO:0000269" key="8">
    <source>
    </source>
</evidence>
<evidence type="ECO:0000269" key="9">
    <source>
    </source>
</evidence>
<evidence type="ECO:0000269" key="10">
    <source>
    </source>
</evidence>
<evidence type="ECO:0000269" key="11">
    <source>
    </source>
</evidence>
<evidence type="ECO:0000269" key="12">
    <source>
    </source>
</evidence>
<evidence type="ECO:0000269" key="13">
    <source>
    </source>
</evidence>
<evidence type="ECO:0000269" key="14">
    <source>
    </source>
</evidence>
<evidence type="ECO:0000269" key="15">
    <source>
    </source>
</evidence>
<evidence type="ECO:0000269" key="16">
    <source>
    </source>
</evidence>
<evidence type="ECO:0000269" key="17">
    <source>
    </source>
</evidence>
<evidence type="ECO:0000269" key="18">
    <source>
    </source>
</evidence>
<evidence type="ECO:0000269" key="19">
    <source>
    </source>
</evidence>
<evidence type="ECO:0000269" key="20">
    <source>
    </source>
</evidence>
<evidence type="ECO:0000269" key="21">
    <source>
    </source>
</evidence>
<evidence type="ECO:0000269" key="22">
    <source>
    </source>
</evidence>
<evidence type="ECO:0000269" key="23">
    <source>
    </source>
</evidence>
<evidence type="ECO:0000269" key="24">
    <source>
    </source>
</evidence>
<evidence type="ECO:0000269" key="25">
    <source>
    </source>
</evidence>
<evidence type="ECO:0000269" key="26">
    <source>
    </source>
</evidence>
<evidence type="ECO:0000269" key="27">
    <source>
    </source>
</evidence>
<evidence type="ECO:0000269" key="28">
    <source>
    </source>
</evidence>
<evidence type="ECO:0000269" key="29">
    <source>
    </source>
</evidence>
<evidence type="ECO:0000269" key="30">
    <source>
    </source>
</evidence>
<evidence type="ECO:0000269" key="31">
    <source>
    </source>
</evidence>
<evidence type="ECO:0000269" key="32">
    <source>
    </source>
</evidence>
<evidence type="ECO:0000269" key="33">
    <source>
    </source>
</evidence>
<evidence type="ECO:0000269" key="34">
    <source>
    </source>
</evidence>
<evidence type="ECO:0000269" key="35">
    <source>
    </source>
</evidence>
<evidence type="ECO:0000269" key="36">
    <source>
    </source>
</evidence>
<evidence type="ECO:0000269" key="37">
    <source>
    </source>
</evidence>
<evidence type="ECO:0000269" key="38">
    <source>
    </source>
</evidence>
<evidence type="ECO:0000269" key="39">
    <source>
    </source>
</evidence>
<evidence type="ECO:0000269" key="40">
    <source>
    </source>
</evidence>
<evidence type="ECO:0000269" key="41">
    <source>
    </source>
</evidence>
<evidence type="ECO:0000269" key="42">
    <source>
    </source>
</evidence>
<evidence type="ECO:0000269" key="43">
    <source ref="8"/>
</evidence>
<evidence type="ECO:0000303" key="44">
    <source>
    </source>
</evidence>
<evidence type="ECO:0000303" key="45">
    <source>
    </source>
</evidence>
<evidence type="ECO:0000303" key="46">
    <source>
    </source>
</evidence>
<evidence type="ECO:0000303" key="47">
    <source>
    </source>
</evidence>
<evidence type="ECO:0000305" key="48"/>
<evidence type="ECO:0007744" key="49">
    <source>
    </source>
</evidence>
<evidence type="ECO:0007744" key="50">
    <source>
    </source>
</evidence>
<evidence type="ECO:0007744" key="51">
    <source>
    </source>
</evidence>
<evidence type="ECO:0007829" key="52">
    <source>
        <dbReference type="PDB" id="1M9Z"/>
    </source>
</evidence>
<evidence type="ECO:0007829" key="53">
    <source>
        <dbReference type="PDB" id="1PLO"/>
    </source>
</evidence>
<evidence type="ECO:0007829" key="54">
    <source>
        <dbReference type="PDB" id="2PJY"/>
    </source>
</evidence>
<evidence type="ECO:0007829" key="55">
    <source>
        <dbReference type="PDB" id="5QIN"/>
    </source>
</evidence>
<evidence type="ECO:0007829" key="56">
    <source>
        <dbReference type="PDB" id="5TY4"/>
    </source>
</evidence>
<evidence type="ECO:0007829" key="57">
    <source>
        <dbReference type="PDB" id="7DV6"/>
    </source>
</evidence>
<keyword id="KW-0002">3D-structure</keyword>
<keyword id="KW-0025">Alternative splicing</keyword>
<keyword id="KW-0993">Aortic aneurysm</keyword>
<keyword id="KW-0053">Apoptosis</keyword>
<keyword id="KW-0067">ATP-binding</keyword>
<keyword id="KW-1003">Cell membrane</keyword>
<keyword id="KW-0989">Craniosynostosis</keyword>
<keyword id="KW-0221">Differentiation</keyword>
<keyword id="KW-0903">Direct protein sequencing</keyword>
<keyword id="KW-0225">Disease variant</keyword>
<keyword id="KW-1015">Disulfide bond</keyword>
<keyword id="KW-0325">Glycoprotein</keyword>
<keyword id="KW-0341">Growth regulation</keyword>
<keyword id="KW-0362">Hereditary nonpolyposis colorectal cancer</keyword>
<keyword id="KW-0418">Kinase</keyword>
<keyword id="KW-0460">Magnesium</keyword>
<keyword id="KW-0464">Manganese</keyword>
<keyword id="KW-0472">Membrane</keyword>
<keyword id="KW-0479">Metal-binding</keyword>
<keyword id="KW-0547">Nucleotide-binding</keyword>
<keyword id="KW-0597">Phosphoprotein</keyword>
<keyword id="KW-1267">Proteomics identification</keyword>
<keyword id="KW-0675">Receptor</keyword>
<keyword id="KW-1185">Reference proteome</keyword>
<keyword id="KW-0964">Secreted</keyword>
<keyword id="KW-0723">Serine/threonine-protein kinase</keyword>
<keyword id="KW-0732">Signal</keyword>
<keyword id="KW-0808">Transferase</keyword>
<keyword id="KW-0812">Transmembrane</keyword>
<keyword id="KW-1133">Transmembrane helix</keyword>
<name>TGFR2_HUMAN</name>
<gene>
    <name type="primary">TGFBR2</name>
</gene>
<accession>P37173</accession>
<accession>B4DTV5</accession>
<accession>Q15580</accession>
<accession>Q6DKT6</accession>
<accession>Q99474</accession>
<protein>
    <recommendedName>
        <fullName>TGF-beta receptor type-2</fullName>
        <shortName>TGFR-2</shortName>
        <ecNumber>2.7.11.30</ecNumber>
    </recommendedName>
    <alternativeName>
        <fullName>TGF-beta type II receptor</fullName>
    </alternativeName>
    <alternativeName>
        <fullName>Transforming growth factor-beta receptor type II</fullName>
        <shortName>TGF-beta receptor type II</shortName>
        <shortName>TbetaR-II</shortName>
    </alternativeName>
</protein>
<organism>
    <name type="scientific">Homo sapiens</name>
    <name type="common">Human</name>
    <dbReference type="NCBI Taxonomy" id="9606"/>
    <lineage>
        <taxon>Eukaryota</taxon>
        <taxon>Metazoa</taxon>
        <taxon>Chordata</taxon>
        <taxon>Craniata</taxon>
        <taxon>Vertebrata</taxon>
        <taxon>Euteleostomi</taxon>
        <taxon>Mammalia</taxon>
        <taxon>Eutheria</taxon>
        <taxon>Euarchontoglires</taxon>
        <taxon>Primates</taxon>
        <taxon>Haplorrhini</taxon>
        <taxon>Catarrhini</taxon>
        <taxon>Hominidae</taxon>
        <taxon>Homo</taxon>
    </lineage>
</organism>
<sequence length="567" mass="64568">MGRGLLRGLWPLHIVLWTRIASTIPPHVQKSVNNDMIVTDNNGAVKFPQLCKFCDVRFSTCDNQKSCMSNCSITSICEKPQEVCVAVWRKNDENITLETVCHDPKLPYHDFILEDAASPKCIMKEKKKPGETFFMCSCSSDECNDNIIFSEEYNTSNPDLLLVIFQVTGISLLPPLGVAISVIIIFYCYRVNRQQKLSSTWETGKTRKLMEFSEHCAIILEDDRSDISSTCANNINHNTELLPIELDTLVGKGRFAEVYKAKLKQNTSEQFETVAVKIFPYEEYASWKTEKDIFSDINLKHENILQFLTAEERKTELGKQYWLITAFHAKGNLQEYLTRHVISWEDLRKLGSSLARGIAHLHSDHTPCGRPKMPIVHRDLKSSNILVKNDLTCCLCDFGLSLRLDPTLSVDDLANSGQVGTARYMAPEVLESRMNLENVESFKQTDVYSMALVLWEMTSRCNAVGEVKDYEPPFGSKVREHPCVESMKDNVLRDRGRPEIPSFWLNHQGIQMVCETLTECWDHDPEARLTAQCVAERFSELEHLDRLSGRSCSEEKIPEDGSLNTTK</sequence>
<feature type="signal peptide" evidence="16">
    <location>
        <begin position="1"/>
        <end position="22"/>
    </location>
</feature>
<feature type="chain" id="PRO_0000024426" description="TGF-beta receptor type-2">
    <location>
        <begin position="23"/>
        <end position="567"/>
    </location>
</feature>
<feature type="topological domain" description="Extracellular" evidence="3">
    <location>
        <begin position="23"/>
        <end position="166"/>
    </location>
</feature>
<feature type="transmembrane region" description="Helical" evidence="3">
    <location>
        <begin position="167"/>
        <end position="187"/>
    </location>
</feature>
<feature type="topological domain" description="Cytoplasmic" evidence="3">
    <location>
        <begin position="188"/>
        <end position="567"/>
    </location>
</feature>
<feature type="domain" description="Protein kinase" evidence="4">
    <location>
        <begin position="244"/>
        <end position="544"/>
    </location>
</feature>
<feature type="region of interest" description="Sufficient for interaction with CLU" evidence="36">
    <location>
        <begin position="439"/>
        <end position="567"/>
    </location>
</feature>
<feature type="active site" description="Proton acceptor" evidence="4 5">
    <location>
        <position position="379"/>
    </location>
</feature>
<feature type="binding site" evidence="4">
    <location>
        <begin position="250"/>
        <end position="258"/>
    </location>
    <ligand>
        <name>ATP</name>
        <dbReference type="ChEBI" id="CHEBI:30616"/>
    </ligand>
</feature>
<feature type="binding site" evidence="4">
    <location>
        <position position="277"/>
    </location>
    <ligand>
        <name>ATP</name>
        <dbReference type="ChEBI" id="CHEBI:30616"/>
    </ligand>
</feature>
<feature type="modified residue" description="Phosphoserine" evidence="2">
    <location>
        <position position="409"/>
    </location>
</feature>
<feature type="modified residue" description="Phosphoserine" evidence="49 50 51">
    <location>
        <position position="548"/>
    </location>
</feature>
<feature type="modified residue" description="Phosphoserine" evidence="2">
    <location>
        <position position="553"/>
    </location>
</feature>
<feature type="glycosylation site" description="N-linked (GlcNAc...) asparagine" evidence="3">
    <location>
        <position position="70"/>
    </location>
</feature>
<feature type="glycosylation site" description="N-linked (GlcNAc...) asparagine" evidence="3">
    <location>
        <position position="94"/>
    </location>
</feature>
<feature type="glycosylation site" description="N-linked (GlcNAc...) asparagine" evidence="3">
    <location>
        <position position="154"/>
    </location>
</feature>
<feature type="disulfide bond" evidence="9 10 12 23 27">
    <location>
        <begin position="51"/>
        <end position="84"/>
    </location>
</feature>
<feature type="disulfide bond" evidence="9 10 12 23 27">
    <location>
        <begin position="54"/>
        <end position="71"/>
    </location>
</feature>
<feature type="disulfide bond" evidence="9 10 12 23 27">
    <location>
        <begin position="61"/>
        <end position="67"/>
    </location>
</feature>
<feature type="disulfide bond" evidence="9 10 12 23 27">
    <location>
        <begin position="77"/>
        <end position="101"/>
    </location>
</feature>
<feature type="disulfide bond" evidence="9 10 12 23 27">
    <location>
        <begin position="121"/>
        <end position="136"/>
    </location>
</feature>
<feature type="disulfide bond" evidence="9 10 12 23 27">
    <location>
        <begin position="138"/>
        <end position="143"/>
    </location>
</feature>
<feature type="splice variant" id="VSP_012157" description="In isoform 2." evidence="44 46">
    <original>SV</original>
    <variation>SDVEMEAQKDEIICPSCNRTAHPLRHI</variation>
    <location>
        <begin position="31"/>
        <end position="32"/>
    </location>
</feature>
<feature type="splice variant" id="VSP_061513" description="In isoform 3.">
    <original>MSNCSITSICEKP</original>
    <variation>FSKVHYEGKKKAW</variation>
    <location>
        <begin position="68"/>
        <end position="80"/>
    </location>
</feature>
<feature type="splice variant" id="VSP_061514" description="In isoform 3.">
    <location>
        <begin position="81"/>
        <end position="567"/>
    </location>
</feature>
<feature type="sequence variant" id="VAR_020510" description="In dbSNP:rs17025864." evidence="43">
    <original>M</original>
    <variation>V</variation>
    <location>
        <position position="36"/>
    </location>
</feature>
<feature type="sequence variant" id="VAR_041414" description="In a gastric adenocarcinoma sample; somatic mutation." evidence="22">
    <original>C</original>
    <variation>R</variation>
    <location>
        <position position="61"/>
    </location>
</feature>
<feature type="sequence variant" id="VAR_036070" description="In a colorectal cancer sample; somatic mutation." evidence="20">
    <original>I</original>
    <variation>V</variation>
    <location>
        <position position="73"/>
    </location>
</feature>
<feature type="sequence variant" id="VAR_076167" description="In LDS2; dbSNP:rs780542125." evidence="24">
    <original>R</original>
    <variation>H</variation>
    <location>
        <position position="190"/>
    </location>
</feature>
<feature type="sequence variant" id="VAR_017606" description="In dbSNP:rs56105708." evidence="11 22">
    <original>V</original>
    <variation>I</variation>
    <location>
        <position position="191"/>
    </location>
</feature>
<feature type="sequence variant" id="VAR_076168" description="In LDS2; dbSNP:rs761231369." evidence="24">
    <original>D</original>
    <variation>V</variation>
    <location>
        <position position="247"/>
    </location>
</feature>
<feature type="sequence variant" id="VAR_066723" description="In LDS2." evidence="32">
    <original>Q</original>
    <variation>HE</variation>
    <location>
        <position position="306"/>
    </location>
</feature>
<feature type="sequence variant" id="VAR_022351" description="In LDS2; has a negative effect on TGF-beta signaling; dbSNP:rs28934568." evidence="15 28">
    <original>L</original>
    <variation>P</variation>
    <location>
        <position position="308"/>
    </location>
</feature>
<feature type="sequence variant" id="VAR_008156" description="In HNPCC6; dbSNP:rs34833812." evidence="22 41">
    <original>T</original>
    <variation>M</variation>
    <location>
        <position position="315"/>
    </location>
</feature>
<feature type="sequence variant" id="VAR_076169" description="In LDS2; dbSNP:rs2125435431." evidence="24">
    <original>T</original>
    <variation>P</variation>
    <location>
        <position position="325"/>
    </location>
</feature>
<feature type="sequence variant" id="VAR_041415" description="In a lung neuroendocrine carcinoma sample; somatic mutation; dbSNP:rs2125435491." evidence="22">
    <original>H</original>
    <variation>Y</variation>
    <location>
        <position position="328"/>
    </location>
</feature>
<feature type="sequence variant" id="VAR_022352" description="In LDS2; dbSNP:rs104893812." evidence="17">
    <original>Y</original>
    <variation>N</variation>
    <location>
        <position position="336"/>
    </location>
</feature>
<feature type="sequence variant" id="VAR_022353" description="In LDS2; dbSNP:rs104893813." evidence="17">
    <original>A</original>
    <variation>P</variation>
    <location>
        <position position="355"/>
    </location>
</feature>
<feature type="sequence variant" id="VAR_076170" description="In LDS2." evidence="24">
    <original>G</original>
    <variation>R</variation>
    <location>
        <position position="357"/>
    </location>
</feature>
<feature type="sequence variant" id="VAR_022354" description="In LDS2; dbSNP:rs104893814." evidence="17">
    <original>G</original>
    <variation>W</variation>
    <location>
        <position position="357"/>
    </location>
</feature>
<feature type="sequence variant" id="VAR_041416" description="In dbSNP:rs35719192." evidence="22">
    <original>M</original>
    <variation>I</variation>
    <location>
        <position position="373"/>
    </location>
</feature>
<feature type="sequence variant" id="VAR_066724" description="In LDS2; dbSNP:rs1553630274." evidence="32">
    <original>H</original>
    <variation>R</variation>
    <location>
        <position position="377"/>
    </location>
</feature>
<feature type="sequence variant" id="VAR_022355" description="In a breast tumor; dbSNP:rs35766612." evidence="7 22">
    <original>V</original>
    <variation>M</variation>
    <location>
        <position position="387"/>
    </location>
</feature>
<feature type="sequence variant" id="VAR_022356" description="In a breast tumor; signaling of TGF-beta significantly inhibited." evidence="7">
    <original>N</original>
    <variation>S</variation>
    <location>
        <position position="435"/>
    </location>
</feature>
<feature type="sequence variant" id="VAR_028063" description="In dbSNP:rs1050833." evidence="14 38 39 40">
    <original>V</original>
    <variation>A</variation>
    <location>
        <position position="439"/>
    </location>
</feature>
<feature type="sequence variant" id="VAR_066725" description="In LDS2; dbSNP:rs886039551." evidence="19">
    <original>D</original>
    <variation>N</variation>
    <location>
        <position position="446"/>
    </location>
</feature>
<feature type="sequence variant" id="VAR_022357" description="In a breast tumor; signaling of TGF-beta significantly inhibited." evidence="7">
    <original>V</original>
    <variation>A</variation>
    <location>
        <position position="447"/>
    </location>
</feature>
<feature type="sequence variant" id="VAR_022358" description="In LDS2; has a negative effect on TGF-beta signaling; dbSNP:rs104893807." evidence="15 32">
    <original>S</original>
    <variation>F</variation>
    <location>
        <position position="449"/>
    </location>
</feature>
<feature type="sequence variant" id="VAR_022359" description="In a breast tumor; signaling of TGF-beta significantly inhibited." evidence="7">
    <original>L</original>
    <variation>M</variation>
    <location>
        <position position="452"/>
    </location>
</feature>
<feature type="sequence variant" id="VAR_066726" description="In LDS2." evidence="26">
    <original>M</original>
    <variation>K</variation>
    <location>
        <position position="457"/>
    </location>
</feature>
<feature type="sequence variant" id="VAR_029760" description="In LDS2; dbSNP:rs104893811." evidence="18">
    <original>R</original>
    <variation>C</variation>
    <location>
        <position position="460"/>
    </location>
</feature>
<feature type="sequence variant" id="VAR_029761" description="In LDS2; dbSNP:rs104893816." evidence="18">
    <original>R</original>
    <variation>H</variation>
    <location>
        <position position="460"/>
    </location>
</feature>
<feature type="sequence variant" id="VAR_041417" description="In a gastric adenocarcinoma sample; somatic mutation; dbSNP:rs1699660823." evidence="22">
    <original>N</original>
    <variation>S</variation>
    <location>
        <position position="490"/>
    </location>
</feature>
<feature type="sequence variant" id="VAR_066727" description="In LDS2; dbSNP:rs863223853." evidence="31">
    <original>G</original>
    <variation>V</variation>
    <location>
        <position position="509"/>
    </location>
</feature>
<feature type="sequence variant" id="VAR_066728" description="In LDS2; dbSNP:rs2125455070." evidence="31">
    <original>I</original>
    <variation>F</variation>
    <location>
        <position position="510"/>
    </location>
</feature>
<feature type="sequence variant" id="VAR_066729" description="In LDS2." evidence="25">
    <original>I</original>
    <variation>S</variation>
    <location>
        <position position="510"/>
    </location>
</feature>
<feature type="sequence variant" id="VAR_066730" description="In LDS2; dbSNP:rs193922664." evidence="32">
    <original>C</original>
    <variation>R</variation>
    <location>
        <position position="514"/>
    </location>
</feature>
<feature type="sequence variant" id="VAR_066731" description="In LDS2; dbSNP:rs1575166666." evidence="28">
    <original>W</original>
    <variation>R</variation>
    <location>
        <position position="521"/>
    </location>
</feature>
<feature type="sequence variant" id="VAR_015816" description="In esophageal cancer; dbSNP:rs121918714." evidence="6">
    <original>E</original>
    <variation>Q</variation>
    <location>
        <position position="526"/>
    </location>
</feature>
<feature type="sequence variant" id="VAR_022360" description="In LDS2; dbSNP:rs104893810." evidence="17">
    <original>R</original>
    <variation>C</variation>
    <location>
        <position position="528"/>
    </location>
</feature>
<feature type="sequence variant" id="VAR_022361" description="In LDS2; dbSNP:rs104893815." evidence="17 20">
    <original>R</original>
    <variation>H</variation>
    <location>
        <position position="528"/>
    </location>
</feature>
<feature type="sequence variant" id="VAR_076171" description="In LDS2; dbSNP:rs1699708963." evidence="24">
    <original>T</original>
    <variation>I</variation>
    <location>
        <position position="530"/>
    </location>
</feature>
<feature type="sequence variant" id="VAR_022362" description="In LDS2; has a negative effect on TGF-beta signaling; dbSNP:rs104893809." evidence="15">
    <original>R</original>
    <variation>C</variation>
    <location>
        <position position="537"/>
    </location>
</feature>
<feature type="mutagenesis site" description="Abolishes kinase activity, TGF-beta signaling and interaction with DAXX." evidence="8">
    <original>K</original>
    <variation>R</variation>
    <location>
        <position position="277"/>
    </location>
</feature>
<feature type="sequence conflict" description="In Ref. 6; BAA09332." evidence="48" ref="6">
    <original>K</original>
    <variation>N</variation>
    <location>
        <position position="381"/>
    </location>
</feature>
<feature type="strand" evidence="53">
    <location>
        <begin position="40"/>
        <end position="45"/>
    </location>
</feature>
<feature type="strand" evidence="52">
    <location>
        <begin position="50"/>
        <end position="52"/>
    </location>
</feature>
<feature type="strand" evidence="52">
    <location>
        <begin position="55"/>
        <end position="58"/>
    </location>
</feature>
<feature type="strand" evidence="52">
    <location>
        <begin position="65"/>
        <end position="68"/>
    </location>
</feature>
<feature type="strand" evidence="52">
    <location>
        <begin position="74"/>
        <end position="76"/>
    </location>
</feature>
<feature type="strand" evidence="53">
    <location>
        <begin position="78"/>
        <end position="81"/>
    </location>
</feature>
<feature type="strand" evidence="52">
    <location>
        <begin position="83"/>
        <end position="90"/>
    </location>
</feature>
<feature type="strand" evidence="52">
    <location>
        <begin position="95"/>
        <end position="102"/>
    </location>
</feature>
<feature type="strand" evidence="56">
    <location>
        <begin position="104"/>
        <end position="106"/>
    </location>
</feature>
<feature type="strand" evidence="54">
    <location>
        <begin position="108"/>
        <end position="110"/>
    </location>
</feature>
<feature type="turn" evidence="52">
    <location>
        <begin position="114"/>
        <end position="117"/>
    </location>
</feature>
<feature type="strand" evidence="52">
    <location>
        <begin position="119"/>
        <end position="122"/>
    </location>
</feature>
<feature type="strand" evidence="52">
    <location>
        <begin position="124"/>
        <end position="126"/>
    </location>
</feature>
<feature type="strand" evidence="52">
    <location>
        <begin position="131"/>
        <end position="138"/>
    </location>
</feature>
<feature type="strand" evidence="53">
    <location>
        <begin position="140"/>
        <end position="142"/>
    </location>
</feature>
<feature type="helix" evidence="52">
    <location>
        <begin position="143"/>
        <end position="145"/>
    </location>
</feature>
<feature type="strand" evidence="52">
    <location>
        <begin position="146"/>
        <end position="148"/>
    </location>
</feature>
<feature type="strand" evidence="53">
    <location>
        <begin position="149"/>
        <end position="154"/>
    </location>
</feature>
<feature type="strand" evidence="55">
    <location>
        <begin position="244"/>
        <end position="252"/>
    </location>
</feature>
<feature type="strand" evidence="55">
    <location>
        <begin position="257"/>
        <end position="263"/>
    </location>
</feature>
<feature type="strand" evidence="57">
    <location>
        <begin position="267"/>
        <end position="269"/>
    </location>
</feature>
<feature type="strand" evidence="55">
    <location>
        <begin position="272"/>
        <end position="280"/>
    </location>
</feature>
<feature type="helix" evidence="55">
    <location>
        <begin position="281"/>
        <end position="283"/>
    </location>
</feature>
<feature type="helix" evidence="55">
    <location>
        <begin position="284"/>
        <end position="294"/>
    </location>
</feature>
<feature type="turn" evidence="55">
    <location>
        <begin position="297"/>
        <end position="299"/>
    </location>
</feature>
<feature type="strand" evidence="55">
    <location>
        <begin position="307"/>
        <end position="315"/>
    </location>
</feature>
<feature type="strand" evidence="55">
    <location>
        <begin position="318"/>
        <end position="326"/>
    </location>
</feature>
<feature type="helix" evidence="55">
    <location>
        <begin position="333"/>
        <end position="339"/>
    </location>
</feature>
<feature type="helix" evidence="55">
    <location>
        <begin position="344"/>
        <end position="362"/>
    </location>
</feature>
<feature type="helix" evidence="55">
    <location>
        <begin position="382"/>
        <end position="384"/>
    </location>
</feature>
<feature type="strand" evidence="55">
    <location>
        <begin position="385"/>
        <end position="387"/>
    </location>
</feature>
<feature type="strand" evidence="55">
    <location>
        <begin position="393"/>
        <end position="395"/>
    </location>
</feature>
<feature type="helix" evidence="55">
    <location>
        <begin position="410"/>
        <end position="413"/>
    </location>
</feature>
<feature type="helix" evidence="55">
    <location>
        <begin position="422"/>
        <end position="424"/>
    </location>
</feature>
<feature type="helix" evidence="55">
    <location>
        <begin position="427"/>
        <end position="430"/>
    </location>
</feature>
<feature type="helix" evidence="55">
    <location>
        <begin position="440"/>
        <end position="459"/>
    </location>
</feature>
<feature type="helix" evidence="55">
    <location>
        <begin position="462"/>
        <end position="464"/>
    </location>
</feature>
<feature type="turn" evidence="55">
    <location>
        <begin position="473"/>
        <end position="477"/>
    </location>
</feature>
<feature type="helix" evidence="55">
    <location>
        <begin position="484"/>
        <end position="491"/>
    </location>
</feature>
<feature type="turn" evidence="55">
    <location>
        <begin position="492"/>
        <end position="494"/>
    </location>
</feature>
<feature type="helix" evidence="55">
    <location>
        <begin position="502"/>
        <end position="506"/>
    </location>
</feature>
<feature type="helix" evidence="55">
    <location>
        <begin position="508"/>
        <end position="520"/>
    </location>
</feature>
<feature type="helix" evidence="55">
    <location>
        <begin position="525"/>
        <end position="527"/>
    </location>
</feature>
<feature type="helix" evidence="55">
    <location>
        <begin position="531"/>
        <end position="539"/>
    </location>
</feature>
<comment type="function">
    <text evidence="35">Transmembrane serine/threonine kinase forming with the TGF-beta type I serine/threonine kinase receptor, TGFBR1, the non-promiscuous receptor for the TGF-beta cytokines TGFB1, TGFB2 and TGFB3. Transduces the TGFB1, TGFB2 and TGFB3 signal from the cell surface to the cytoplasm and thus regulates a plethora of physiological and pathological processes including cell cycle arrest in epithelial and hematopoietic cells, control of mesenchymal cell proliferation and differentiation, wound healing, extracellular matrix production, immunosuppression and carcinogenesis. The formation of the receptor complex composed of 2 TGFBR1 and 2 TGFBR2 molecules symmetrically bound to the cytokine dimer results in the phosphorylation and activation of TGFBR1 by the constitutively active TGFBR2. Activated TGFBR1 phosphorylates SMAD2 which dissociates from the receptor and interacts with SMAD4. The SMAD2-SMAD4 complex is subsequently translocated to the nucleus where it modulates the transcription of the TGF-beta-regulated genes. This constitutes the canonical SMAD-dependent TGF-beta signaling cascade. Also involved in non-canonical, SMAD-independent TGF-beta signaling pathways.</text>
</comment>
<comment type="function">
    <molecule>Isoform 1</molecule>
    <text evidence="37">Has transforming growth factor beta-activated receptor activity.</text>
</comment>
<comment type="function">
    <molecule>Isoform 2</molecule>
    <text evidence="37">Has transforming growth factor beta-activated receptor activity.</text>
</comment>
<comment type="function">
    <molecule>Isoform 3</molecule>
    <text evidence="34">Binds TGFB1, TGFB2 and TGFB3 in the picomolar affinity range without the participation of additional receptors. Blocks activation of SMAD2 and SMAD3 by TGFB1.</text>
</comment>
<comment type="catalytic activity">
    <reaction>
        <text>L-threonyl-[receptor-protein] + ATP = O-phospho-L-threonyl-[receptor-protein] + ADP + H(+)</text>
        <dbReference type="Rhea" id="RHEA:44880"/>
        <dbReference type="Rhea" id="RHEA-COMP:11024"/>
        <dbReference type="Rhea" id="RHEA-COMP:11025"/>
        <dbReference type="ChEBI" id="CHEBI:15378"/>
        <dbReference type="ChEBI" id="CHEBI:30013"/>
        <dbReference type="ChEBI" id="CHEBI:30616"/>
        <dbReference type="ChEBI" id="CHEBI:61977"/>
        <dbReference type="ChEBI" id="CHEBI:456216"/>
        <dbReference type="EC" id="2.7.11.30"/>
    </reaction>
</comment>
<comment type="catalytic activity">
    <reaction>
        <text>L-seryl-[receptor-protein] + ATP = O-phospho-L-seryl-[receptor-protein] + ADP + H(+)</text>
        <dbReference type="Rhea" id="RHEA:18673"/>
        <dbReference type="Rhea" id="RHEA-COMP:11022"/>
        <dbReference type="Rhea" id="RHEA-COMP:11023"/>
        <dbReference type="ChEBI" id="CHEBI:15378"/>
        <dbReference type="ChEBI" id="CHEBI:29999"/>
        <dbReference type="ChEBI" id="CHEBI:30616"/>
        <dbReference type="ChEBI" id="CHEBI:83421"/>
        <dbReference type="ChEBI" id="CHEBI:456216"/>
        <dbReference type="EC" id="2.7.11.30"/>
    </reaction>
</comment>
<comment type="cofactor">
    <cofactor evidence="1">
        <name>Mg(2+)</name>
        <dbReference type="ChEBI" id="CHEBI:18420"/>
    </cofactor>
    <cofactor evidence="1">
        <name>Mn(2+)</name>
        <dbReference type="ChEBI" id="CHEBI:29035"/>
    </cofactor>
</comment>
<comment type="subunit">
    <text evidence="8 9 13 21 23 27 29 30 36 42">Homodimer. Heterohexamer; TGFB1, TGFB2 and TGFB3 homodimeric ligands assemble a functional receptor composed of two TGFBR1 and TGFBR2 heterodimers to form a ligand-receptor heterohexamer. The respective affinity of TGFRB1 and TGFRB2 for the ligands may modulate the kinetics of assembly of the receptor and may explain the different biological activities of TGFB1, TGFB2 and TGFB3. Component of a complex composed of TSC22D1 (via N-terminus), TGFBR1 and TGFBR2; the interaction between TSC22D1 and TGFBR1 is inhibited by SMAD7 and promoted by TGFB1 (PubMed:21791611). Interacts with DAXX. Interacts with DYNLT4. Interacts with ZFYVE9; ZFYVE9 recruits SMAD2 and SMAD3 to the TGF-beta receptor. Interacts with and is activated by SCUBE3; this interaction does not affect TGFB1-binding to TGFBR2. Interacts with VPS39; this interaction is independent of the receptor kinase activity and of the presence of TGF-beta. Interacts with CLU (PubMed:8555189).</text>
</comment>
<comment type="subunit">
    <molecule>Isoform 3</molecule>
    <text evidence="34">Homodimer; disulfide-linked.</text>
</comment>
<comment type="interaction">
    <interactant intactId="EBI-296151">
        <id>P37173</id>
    </interactant>
    <interactant intactId="EBI-1056291">
        <id>P54819</id>
        <label>AK2</label>
    </interactant>
    <organismsDiffer>false</organismsDiffer>
    <experiments>3</experiments>
</comment>
<comment type="interaction">
    <interactant intactId="EBI-296151">
        <id>P37173</id>
    </interactant>
    <interactant intactId="EBI-12067760">
        <id>P61966-2</id>
        <label>AP1S1</label>
    </interactant>
    <organismsDiffer>false</organismsDiffer>
    <experiments>3</experiments>
</comment>
<comment type="interaction">
    <interactant intactId="EBI-296151">
        <id>P37173</id>
    </interactant>
    <interactant intactId="EBI-2875816">
        <id>Q9NP61</id>
        <label>ARFGAP3</label>
    </interactant>
    <organismsDiffer>false</organismsDiffer>
    <experiments>3</experiments>
</comment>
<comment type="interaction">
    <interactant intactId="EBI-296151">
        <id>P37173</id>
    </interactant>
    <interactant intactId="EBI-20151086">
        <id>O75143-2</id>
        <label>ATG13</label>
    </interactant>
    <organismsDiffer>false</organismsDiffer>
    <experiments>3</experiments>
</comment>
<comment type="interaction">
    <interactant intactId="EBI-296151">
        <id>P37173</id>
    </interactant>
    <interactant intactId="EBI-21505448">
        <id>Q93084-2</id>
        <label>ATP2A3</label>
    </interactant>
    <organismsDiffer>false</organismsDiffer>
    <experiments>3</experiments>
</comment>
<comment type="interaction">
    <interactant intactId="EBI-296151">
        <id>P37173</id>
    </interactant>
    <interactant intactId="EBI-930964">
        <id>P54253</id>
        <label>ATXN1</label>
    </interactant>
    <organismsDiffer>false</organismsDiffer>
    <experiments>3</experiments>
</comment>
<comment type="interaction">
    <interactant intactId="EBI-296151">
        <id>P37173</id>
    </interactant>
    <interactant intactId="EBI-946046">
        <id>P54252</id>
        <label>ATXN3</label>
    </interactant>
    <organismsDiffer>false</organismsDiffer>
    <experiments>3</experiments>
</comment>
<comment type="interaction">
    <interactant intactId="EBI-296151">
        <id>P37173</id>
    </interactant>
    <interactant intactId="EBI-12928880">
        <id>Q4VBR4</id>
        <label>ATXN3</label>
    </interactant>
    <organismsDiffer>false</organismsDiffer>
    <experiments>3</experiments>
</comment>
<comment type="interaction">
    <interactant intactId="EBI-296151">
        <id>P37173</id>
    </interactant>
    <interactant intactId="EBI-742750">
        <id>Q8TBE0</id>
        <label>BAHD1</label>
    </interactant>
    <organismsDiffer>false</organismsDiffer>
    <experiments>3</experiments>
</comment>
<comment type="interaction">
    <interactant intactId="EBI-296151">
        <id>P37173</id>
    </interactant>
    <interactant intactId="EBI-747505">
        <id>Q8TAB5</id>
        <label>C1orf216</label>
    </interactant>
    <organismsDiffer>false</organismsDiffer>
    <experiments>3</experiments>
</comment>
<comment type="interaction">
    <interactant intactId="EBI-296151">
        <id>P37173</id>
    </interactant>
    <interactant intactId="EBI-356687">
        <id>P40227</id>
        <label>CCT6A</label>
    </interactant>
    <organismsDiffer>false</organismsDiffer>
    <experiments>3</experiments>
</comment>
<comment type="interaction">
    <interactant intactId="EBI-296151">
        <id>P37173</id>
    </interactant>
    <interactant intactId="EBI-727477">
        <id>P12830</id>
        <label>CDH1</label>
    </interactant>
    <organismsDiffer>false</organismsDiffer>
    <experiments>3</experiments>
</comment>
<comment type="interaction">
    <interactant intactId="EBI-296151">
        <id>P37173</id>
    </interactant>
    <interactant intactId="EBI-25836642">
        <id>Q8NE08</id>
        <label>COL25A1</label>
    </interactant>
    <organismsDiffer>false</organismsDiffer>
    <experiments>3</experiments>
</comment>
<comment type="interaction">
    <interactant intactId="EBI-296151">
        <id>P37173</id>
    </interactant>
    <interactant intactId="EBI-9087876">
        <id>P48730-2</id>
        <label>CSNK1D</label>
    </interactant>
    <organismsDiffer>false</organismsDiffer>
    <experiments>3</experiments>
</comment>
<comment type="interaction">
    <interactant intactId="EBI-296151">
        <id>P37173</id>
    </interactant>
    <interactant intactId="EBI-77321">
        <id>Q9UER7</id>
        <label>DAXX</label>
    </interactant>
    <organismsDiffer>false</organismsDiffer>
    <experiments>2</experiments>
</comment>
<comment type="interaction">
    <interactant intactId="EBI-296151">
        <id>P37173</id>
    </interactant>
    <interactant intactId="EBI-719232">
        <id>Q9UMR2</id>
        <label>DDX19B</label>
    </interactant>
    <organismsDiffer>false</organismsDiffer>
    <experiments>3</experiments>
</comment>
<comment type="interaction">
    <interactant intactId="EBI-296151">
        <id>P37173</id>
    </interactant>
    <interactant intactId="EBI-20894690">
        <id>P49184</id>
        <label>DNASE1L1</label>
    </interactant>
    <organismsDiffer>false</organismsDiffer>
    <experiments>3</experiments>
</comment>
<comment type="interaction">
    <interactant intactId="EBI-296151">
        <id>P37173</id>
    </interactant>
    <interactant intactId="EBI-719542">
        <id>O14531</id>
        <label>DPYSL4</label>
    </interactant>
    <organismsDiffer>false</organismsDiffer>
    <experiments>3</experiments>
</comment>
<comment type="interaction">
    <interactant intactId="EBI-296151">
        <id>P37173</id>
    </interactant>
    <interactant intactId="EBI-21603100">
        <id>P26378-2</id>
        <label>ELAVL4</label>
    </interactant>
    <organismsDiffer>false</organismsDiffer>
    <experiments>3</experiments>
</comment>
<comment type="interaction">
    <interactant intactId="EBI-296151">
        <id>P37173</id>
    </interactant>
    <interactant intactId="EBI-1646991">
        <id>P15036</id>
        <label>ETS2</label>
    </interactant>
    <organismsDiffer>false</organismsDiffer>
    <experiments>3</experiments>
</comment>
<comment type="interaction">
    <interactant intactId="EBI-296151">
        <id>P37173</id>
    </interactant>
    <interactant intactId="EBI-715087">
        <id>P09471</id>
        <label>GNAO1</label>
    </interactant>
    <organismsDiffer>false</organismsDiffer>
    <experiments>3</experiments>
</comment>
<comment type="interaction">
    <interactant intactId="EBI-296151">
        <id>P37173</id>
    </interactant>
    <interactant intactId="EBI-7187133">
        <id>P51674</id>
        <label>GPM6A</label>
    </interactant>
    <organismsDiffer>false</organismsDiffer>
    <experiments>3</experiments>
</comment>
<comment type="interaction">
    <interactant intactId="EBI-296151">
        <id>P37173</id>
    </interactant>
    <interactant intactId="EBI-466029">
        <id>P42858</id>
        <label>HTT</label>
    </interactant>
    <organismsDiffer>false</organismsDiffer>
    <experiments>3</experiments>
</comment>
<comment type="interaction">
    <interactant intactId="EBI-296151">
        <id>P37173</id>
    </interactant>
    <interactant intactId="EBI-715695">
        <id>O75874</id>
        <label>IDH1</label>
    </interactant>
    <organismsDiffer>false</organismsDiffer>
    <experiments>3</experiments>
</comment>
<comment type="interaction">
    <interactant intactId="EBI-296151">
        <id>P37173</id>
    </interactant>
    <interactant intactId="EBI-722540">
        <id>Q6PI98</id>
        <label>INO80C</label>
    </interactant>
    <organismsDiffer>false</organismsDiffer>
    <experiments>3</experiments>
</comment>
<comment type="interaction">
    <interactant intactId="EBI-296151">
        <id>P37173</id>
    </interactant>
    <interactant intactId="EBI-2557660">
        <id>Q9ULR0</id>
        <label>ISY1</label>
    </interactant>
    <organismsDiffer>false</organismsDiffer>
    <experiments>3</experiments>
</comment>
<comment type="interaction">
    <interactant intactId="EBI-296151">
        <id>P37173</id>
    </interactant>
    <interactant intactId="EBI-298282">
        <id>P06756</id>
        <label>ITGAV</label>
    </interactant>
    <organismsDiffer>false</organismsDiffer>
    <experiments>3</experiments>
</comment>
<comment type="interaction">
    <interactant intactId="EBI-296151">
        <id>P37173</id>
    </interactant>
    <interactant intactId="EBI-746662">
        <id>P23276</id>
        <label>KEL</label>
    </interactant>
    <organismsDiffer>false</organismsDiffer>
    <experiments>3</experiments>
</comment>
<comment type="interaction">
    <interactant intactId="EBI-296151">
        <id>P37173</id>
    </interactant>
    <interactant intactId="EBI-3915857">
        <id>O60259</id>
        <label>KLK8</label>
    </interactant>
    <organismsDiffer>false</organismsDiffer>
    <experiments>3</experiments>
</comment>
<comment type="interaction">
    <interactant intactId="EBI-296151">
        <id>P37173</id>
    </interactant>
    <interactant intactId="EBI-750770">
        <id>Q96E93</id>
        <label>KLRG1</label>
    </interactant>
    <organismsDiffer>false</organismsDiffer>
    <experiments>3</experiments>
</comment>
<comment type="interaction">
    <interactant intactId="EBI-296151">
        <id>P37173</id>
    </interactant>
    <interactant intactId="EBI-2340947">
        <id>Q8N448</id>
        <label>LNX2</label>
    </interactant>
    <organismsDiffer>false</organismsDiffer>
    <experiments>3</experiments>
</comment>
<comment type="interaction">
    <interactant intactId="EBI-296151">
        <id>P37173</id>
    </interactant>
    <interactant intactId="EBI-995373">
        <id>Q7Z434</id>
        <label>MAVS</label>
    </interactant>
    <organismsDiffer>false</organismsDiffer>
    <experiments>3</experiments>
</comment>
<comment type="interaction">
    <interactant intactId="EBI-296151">
        <id>P37173</id>
    </interactant>
    <interactant intactId="EBI-394357">
        <id>Q93074</id>
        <label>MED12</label>
    </interactant>
    <organismsDiffer>false</organismsDiffer>
    <experiments>3</experiments>
</comment>
<comment type="interaction">
    <interactant intactId="EBI-296151">
        <id>P37173</id>
    </interactant>
    <interactant intactId="EBI-11337904">
        <id>Q14728</id>
        <label>MFSD10</label>
    </interactant>
    <organismsDiffer>false</organismsDiffer>
    <experiments>3</experiments>
</comment>
<comment type="interaction">
    <interactant intactId="EBI-296151">
        <id>P37173</id>
    </interactant>
    <interactant intactId="EBI-447544">
        <id>P01106</id>
        <label>MYC</label>
    </interactant>
    <organismsDiffer>false</organismsDiffer>
    <experiments>3</experiments>
</comment>
<comment type="interaction">
    <interactant intactId="EBI-296151">
        <id>P37173</id>
    </interactant>
    <interactant intactId="EBI-3446748">
        <id>Q9NPC7</id>
        <label>MYNN</label>
    </interactant>
    <organismsDiffer>false</organismsDiffer>
    <experiments>3</experiments>
</comment>
<comment type="interaction">
    <interactant intactId="EBI-296151">
        <id>P37173</id>
    </interactant>
    <interactant intactId="EBI-17754404">
        <id>Q99435-2</id>
        <label>NELL2</label>
    </interactant>
    <organismsDiffer>false</organismsDiffer>
    <experiments>3</experiments>
</comment>
<comment type="interaction">
    <interactant intactId="EBI-296151">
        <id>P37173</id>
    </interactant>
    <interactant intactId="EBI-1994109">
        <id>Q8TAT6</id>
        <label>NPLOC4</label>
    </interactant>
    <organismsDiffer>false</organismsDiffer>
    <experiments>3</experiments>
</comment>
<comment type="interaction">
    <interactant intactId="EBI-296151">
        <id>P37173</id>
    </interactant>
    <interactant intactId="EBI-22002759">
        <id>Q9BZ95-3</id>
        <label>NSD3</label>
    </interactant>
    <organismsDiffer>false</organismsDiffer>
    <experiments>3</experiments>
</comment>
<comment type="interaction">
    <interactant intactId="EBI-296151">
        <id>P37173</id>
    </interactant>
    <interactant intactId="EBI-2554690">
        <id>Q96IY1</id>
        <label>NSL1</label>
    </interactant>
    <organismsDiffer>false</organismsDiffer>
    <experiments>3</experiments>
</comment>
<comment type="interaction">
    <interactant intactId="EBI-296151">
        <id>P37173</id>
    </interactant>
    <interactant intactId="EBI-8059854">
        <id>Q16549</id>
        <label>PCSK7</label>
    </interactant>
    <organismsDiffer>false</organismsDiffer>
    <experiments>3</experiments>
</comment>
<comment type="interaction">
    <interactant intactId="EBI-296151">
        <id>P37173</id>
    </interactant>
    <interactant intactId="EBI-25836582">
        <id>Q9NUD9</id>
        <label>PIGV</label>
    </interactant>
    <organismsDiffer>false</organismsDiffer>
    <experiments>3</experiments>
</comment>
<comment type="interaction">
    <interactant intactId="EBI-296151">
        <id>P37173</id>
    </interactant>
    <interactant intactId="EBI-18063495">
        <id>Q8TBJ4</id>
        <label>PLPPR1</label>
    </interactant>
    <organismsDiffer>false</organismsDiffer>
    <experiments>3</experiments>
</comment>
<comment type="interaction">
    <interactant intactId="EBI-296151">
        <id>P37173</id>
    </interactant>
    <interactant intactId="EBI-78615">
        <id>Q07869</id>
        <label>PPARA</label>
    </interactant>
    <organismsDiffer>false</organismsDiffer>
    <experiments>3</experiments>
</comment>
<comment type="interaction">
    <interactant intactId="EBI-296151">
        <id>P37173</id>
    </interactant>
    <interactant intactId="EBI-357648">
        <id>Q13200</id>
        <label>PSMD2</label>
    </interactant>
    <organismsDiffer>false</organismsDiffer>
    <experiments>3</experiments>
</comment>
<comment type="interaction">
    <interactant intactId="EBI-296151">
        <id>P37173</id>
    </interactant>
    <interactant intactId="EBI-473725">
        <id>P21246</id>
        <label>PTN</label>
    </interactant>
    <organismsDiffer>false</organismsDiffer>
    <experiments>3</experiments>
</comment>
<comment type="interaction">
    <interactant intactId="EBI-296151">
        <id>P37173</id>
    </interactant>
    <interactant intactId="EBI-22012855">
        <id>Q13702-2</id>
        <label>RAPSN</label>
    </interactant>
    <organismsDiffer>false</organismsDiffer>
    <experiments>3</experiments>
</comment>
<comment type="interaction">
    <interactant intactId="EBI-296151">
        <id>P37173</id>
    </interactant>
    <interactant intactId="EBI-714003">
        <id>P52756</id>
        <label>RBM5</label>
    </interactant>
    <organismsDiffer>false</organismsDiffer>
    <experiments>3</experiments>
</comment>
<comment type="interaction">
    <interactant intactId="EBI-296151">
        <id>P37173</id>
    </interactant>
    <interactant intactId="EBI-17589229">
        <id>Q6NTF9-3</id>
        <label>RHBDD2</label>
    </interactant>
    <organismsDiffer>false</organismsDiffer>
    <experiments>3</experiments>
</comment>
<comment type="interaction">
    <interactant intactId="EBI-296151">
        <id>P37173</id>
    </interactant>
    <interactant intactId="EBI-2856119">
        <id>Q96NA2</id>
        <label>RILP</label>
    </interactant>
    <organismsDiffer>false</organismsDiffer>
    <experiments>3</experiments>
</comment>
<comment type="interaction">
    <interactant intactId="EBI-296151">
        <id>P37173</id>
    </interactant>
    <interactant intactId="EBI-356793">
        <id>P61513</id>
        <label>RPL37A</label>
    </interactant>
    <organismsDiffer>false</organismsDiffer>
    <experiments>3</experiments>
</comment>
<comment type="interaction">
    <interactant intactId="EBI-296151">
        <id>P37173</id>
    </interactant>
    <interactant intactId="EBI-4479975">
        <id>Q8IX30</id>
        <label>SCUBE3</label>
    </interactant>
    <organismsDiffer>false</organismsDiffer>
    <experiments>6</experiments>
</comment>
<comment type="interaction">
    <interactant intactId="EBI-296151">
        <id>P37173</id>
    </interactant>
    <interactant intactId="EBI-523558">
        <id>Q8NC51</id>
        <label>SERBP1</label>
    </interactant>
    <organismsDiffer>false</organismsDiffer>
    <experiments>3</experiments>
</comment>
<comment type="interaction">
    <interactant intactId="EBI-296151">
        <id>P37173</id>
    </interactant>
    <interactant intactId="EBI-5663553">
        <id>Q16586</id>
        <label>SGCA</label>
    </interactant>
    <organismsDiffer>false</organismsDiffer>
    <experiments>3</experiments>
</comment>
<comment type="interaction">
    <interactant intactId="EBI-296151">
        <id>P37173</id>
    </interactant>
    <interactant intactId="EBI-25831036">
        <id>Q99720-4</id>
        <label>SIGMAR1</label>
    </interactant>
    <organismsDiffer>false</organismsDiffer>
    <experiments>3</experiments>
</comment>
<comment type="interaction">
    <interactant intactId="EBI-296151">
        <id>P37173</id>
    </interactant>
    <interactant intactId="EBI-21504521">
        <id>Q8NCS7</id>
        <label>SLC44A5</label>
    </interactant>
    <organismsDiffer>false</organismsDiffer>
    <experiments>3</experiments>
</comment>
<comment type="interaction">
    <interactant intactId="EBI-296151">
        <id>P37173</id>
    </interactant>
    <interactant intactId="EBI-12938570">
        <id>Q16560-2</id>
        <label>SNRNP35</label>
    </interactant>
    <organismsDiffer>false</organismsDiffer>
    <experiments>3</experiments>
</comment>
<comment type="interaction">
    <interactant intactId="EBI-296151">
        <id>P37173</id>
    </interactant>
    <interactant intactId="EBI-12336127">
        <id>Q7Z614-3</id>
        <label>SNX20</label>
    </interactant>
    <organismsDiffer>false</organismsDiffer>
    <experiments>3</experiments>
</comment>
<comment type="interaction">
    <interactant intactId="EBI-296151">
        <id>P37173</id>
    </interactant>
    <interactant intactId="EBI-11175533">
        <id>Q3SY56</id>
        <label>SP6</label>
    </interactant>
    <organismsDiffer>false</organismsDiffer>
    <experiments>3</experiments>
</comment>
<comment type="interaction">
    <interactant intactId="EBI-296151">
        <id>P37173</id>
    </interactant>
    <interactant intactId="EBI-719212">
        <id>P46977</id>
        <label>STT3A</label>
    </interactant>
    <organismsDiffer>false</organismsDiffer>
    <experiments>3</experiments>
</comment>
<comment type="interaction">
    <interactant intactId="EBI-296151">
        <id>P37173</id>
    </interactant>
    <interactant intactId="EBI-349968">
        <id>O43463</id>
        <label>SUV39H1</label>
    </interactant>
    <organismsDiffer>false</organismsDiffer>
    <experiments>3</experiments>
</comment>
<comment type="interaction">
    <interactant intactId="EBI-296151">
        <id>P37173</id>
    </interactant>
    <interactant intactId="EBI-25832010">
        <id>Q13428-5</id>
        <label>TCOF1</label>
    </interactant>
    <organismsDiffer>false</organismsDiffer>
    <experiments>3</experiments>
</comment>
<comment type="interaction">
    <interactant intactId="EBI-296151">
        <id>P37173</id>
    </interactant>
    <interactant intactId="EBI-779636">
        <id>P01137</id>
        <label>TGFB1</label>
    </interactant>
    <organismsDiffer>false</organismsDiffer>
    <experiments>11</experiments>
</comment>
<comment type="interaction">
    <interactant intactId="EBI-296151">
        <id>P37173</id>
    </interactant>
    <interactant intactId="EBI-1033020">
        <id>P10600</id>
        <label>TGFB3</label>
    </interactant>
    <organismsDiffer>false</organismsDiffer>
    <experiments>8</experiments>
</comment>
<comment type="interaction">
    <interactant intactId="EBI-296151">
        <id>P37173</id>
    </interactant>
    <interactant intactId="EBI-765817">
        <id>Q9Y228</id>
        <label>TRAF3IP3</label>
    </interactant>
    <organismsDiffer>false</organismsDiffer>
    <experiments>3</experiments>
</comment>
<comment type="interaction">
    <interactant intactId="EBI-296151">
        <id>P37173</id>
    </interactant>
    <interactant intactId="EBI-2129899">
        <id>Q96BQ3</id>
        <label>TRIM43</label>
    </interactant>
    <organismsDiffer>false</organismsDiffer>
    <experiments>3</experiments>
</comment>
<comment type="interaction">
    <interactant intactId="EBI-296151">
        <id>P37173</id>
    </interactant>
    <interactant intactId="EBI-2513462">
        <id>Q9UHP3</id>
        <label>USP25</label>
    </interactant>
    <organismsDiffer>false</organismsDiffer>
    <experiments>3</experiments>
</comment>
<comment type="interaction">
    <interactant intactId="EBI-296151">
        <id>P37173</id>
    </interactant>
    <interactant intactId="EBI-10281506">
        <id>Q969W3</id>
        <label>VCF1</label>
    </interactant>
    <organismsDiffer>false</organismsDiffer>
    <experiments>3</experiments>
</comment>
<comment type="interaction">
    <interactant intactId="EBI-296151">
        <id>P37173</id>
    </interactant>
    <interactant intactId="EBI-11745701">
        <id>P19544-6</id>
        <label>WT1</label>
    </interactant>
    <organismsDiffer>false</organismsDiffer>
    <experiments>3</experiments>
</comment>
<comment type="interaction">
    <interactant intactId="EBI-296151">
        <id>P37173</id>
    </interactant>
    <interactant intactId="EBI-765538">
        <id>P25490</id>
        <label>YY1</label>
    </interactant>
    <organismsDiffer>false</organismsDiffer>
    <experiments>3</experiments>
</comment>
<comment type="interaction">
    <interactant intactId="EBI-296151">
        <id>P37173</id>
    </interactant>
    <interactant intactId="EBI-5744969">
        <id>A2AGH6</id>
        <label>Med12</label>
    </interactant>
    <organismsDiffer>true</organismsDiffer>
    <experiments>3</experiments>
</comment>
<comment type="interaction">
    <interactant intactId="EBI-296151">
        <id>P37173</id>
    </interactant>
    <interactant intactId="EBI-907660">
        <id>P07200</id>
        <label>TGFB1</label>
    </interactant>
    <organismsDiffer>true</organismsDiffer>
    <experiments>2</experiments>
</comment>
<comment type="interaction">
    <interactant intactId="EBI-16065370">
        <id>P37173-2</id>
    </interactant>
    <interactant intactId="EBI-9083443">
        <id>P02750</id>
        <label>LRG1</label>
    </interactant>
    <organismsDiffer>false</organismsDiffer>
    <experiments>3</experiments>
</comment>
<comment type="subcellular location">
    <subcellularLocation>
        <location evidence="14 33">Cell membrane</location>
        <topology evidence="14">Single-pass type I membrane protein</topology>
    </subcellularLocation>
    <subcellularLocation>
        <location evidence="33">Membrane raft</location>
    </subcellularLocation>
</comment>
<comment type="subcellular location">
    <molecule>Isoform 3</molecule>
    <subcellularLocation>
        <location evidence="34">Secreted</location>
    </subcellularLocation>
</comment>
<comment type="alternative products">
    <event type="alternative splicing"/>
    <isoform>
        <id>P37173-1</id>
        <name>1</name>
        <name evidence="47">betaR-II</name>
        <sequence type="displayed"/>
    </isoform>
    <isoform>
        <id>P37173-2</id>
        <name>2</name>
        <name evidence="47">betaR-IIB</name>
        <sequence type="described" ref="VSP_012157"/>
    </isoform>
    <isoform>
        <id>P37173-3</id>
        <name>3</name>
        <name evidence="45">TbetaRII-SE</name>
        <sequence type="described" ref="VSP_061513 VSP_061514"/>
    </isoform>
</comment>
<comment type="PTM">
    <text>Phosphorylated on a Ser/Thr residue in the cytoplasmic domain.</text>
</comment>
<comment type="disease" evidence="41">
    <disease id="DI-00555">
        <name>Hereditary non-polyposis colorectal cancer 6</name>
        <acronym>HNPCC6</acronym>
        <description>An autosomal dominant disease associated with marked increase in cancer susceptibility. It is characterized by a familial predisposition to early-onset colorectal carcinoma (CRC) and extra-colonic tumors of the gastrointestinal, urological and female reproductive tracts. HNPCC is reported to be the most common form of inherited colorectal cancer in the Western world. Clinically, HNPCC is often divided into two subgroups. Type I is characterized by hereditary predisposition to colorectal cancer, a young age of onset, and carcinoma observed in the proximal colon. Type II is characterized by increased risk for cancers in certain tissues such as the uterus, ovary, breast, stomach, small intestine, skin, and larynx in addition to the colon. Diagnosis of classical HNPCC is based on the Amsterdam criteria: 3 or more relatives affected by colorectal cancer, one a first degree relative of the other two; 2 or more generation affected; 1 or more colorectal cancers presenting before 50 years of age; exclusion of hereditary polyposis syndromes. The term 'suspected HNPCC' or 'incomplete HNPCC' can be used to describe families who do not or only partially fulfill the Amsterdam criteria, but in whom a genetic basis for colon cancer is strongly suspected.</description>
        <dbReference type="MIM" id="614331"/>
    </disease>
    <text>The disease is caused by variants affecting the gene represented in this entry.</text>
</comment>
<comment type="disease" evidence="6">
    <disease id="DI-01537">
        <name>Esophageal cancer</name>
        <acronym>ESCR</acronym>
        <description>A malignancy of the esophagus. The most common types are esophageal squamous cell carcinoma and adenocarcinoma. Cancer of the esophagus remains a devastating disease because it is usually not detected until it has progressed to an advanced incurable stage.</description>
        <dbReference type="MIM" id="133239"/>
    </disease>
    <text>The disease is caused by variants affecting the gene represented in this entry.</text>
</comment>
<comment type="disease" evidence="15 17 18 19 24 25 26 28 31 32">
    <disease id="DI-00677">
        <name>Loeys-Dietz syndrome 2</name>
        <acronym>LDS2</acronym>
        <description>An aortic aneurysm syndrome with widespread systemic involvement, characterized by arterial tortuosity and aneurysms, hypertelorism, and bifid uvula or cleft palate. Physical findings include prominent joint laxity, easy bruising, wide and atrophic scars, velvety and translucent skin with easily visible veins, spontaneous rupture of the spleen or bowel, and catastrophic complications of pregnancy, including rupture of the gravid uterus and the arteries, either during pregnancy or in the immediate postpartum period. Some patients have craniosynostosis, exotropy, micrognathia and retrognathia, structural brain abnormalities, and intellectual deficit.</description>
        <dbReference type="MIM" id="610168"/>
    </disease>
    <text evidence="18">The disease is caused by variants affecting the gene represented in this entry. TGFBR2 mutations Cys-460 and His-460 have been reported to be associated with thoracic aortic aneurysms and dissection (TAAD). This phenotype, also known as thoracic aortic aneurysms type 3 (AAT3), is distinguised from LDS2 by having aneurysms restricted to thoracic aorta. As individuals carrying these mutations also exhibit descending aortic disease and aneurysms of other arteries (PubMed:16027248), they have been considered as LDS2 by the OMIM resource.</text>
</comment>
<comment type="similarity">
    <text evidence="48">Belongs to the protein kinase superfamily. TKL Ser/Thr protein kinase family. TGFB receptor subfamily.</text>
</comment>
<reference key="1">
    <citation type="journal article" date="1992" name="Cell">
        <title>Expression cloning of the TGF-beta type II receptor, a functional transmembrane serine/threonine kinase.</title>
        <authorList>
            <person name="Lin H.Y."/>
            <person name="Wang X.-F."/>
            <person name="Ng-Eaton E."/>
            <person name="Weinberg R.A."/>
            <person name="Lodish H.F."/>
        </authorList>
    </citation>
    <scope>NUCLEOTIDE SEQUENCE [MRNA] (ISOFORM 1)</scope>
    <scope>VARIANT ALA-439</scope>
    <scope>SUBCELLULAR LOCATION</scope>
    <source>
        <tissue>Liver</tissue>
    </source>
</reference>
<reference key="2">
    <citation type="journal article" date="1992" name="Cell">
        <authorList>
            <person name="Lin H.Y."/>
            <person name="Wang X.-F."/>
            <person name="Ng-Eaton E."/>
            <person name="Weinberg R.A."/>
            <person name="Lodish H.F."/>
        </authorList>
    </citation>
    <scope>ERRATUM OF PUBMED:1310899</scope>
</reference>
<reference key="3">
    <citation type="journal article" date="1994" name="Gene">
        <title>A cDNA encoding the human transforming growth factor beta receptor suppresses the growth defect of a yeast mutant.</title>
        <authorList>
            <person name="Nikawa J."/>
        </authorList>
    </citation>
    <scope>NUCLEOTIDE SEQUENCE [MRNA] (ISOFORM 2)</scope>
    <source>
        <tissue>Glial cell</tissue>
    </source>
</reference>
<reference key="4">
    <citation type="journal article" date="1996" name="Genomics">
        <title>The genomic structure of the gene encoding the human transforming growth factor beta type II receptor (TGF-beta RII).</title>
        <authorList>
            <person name="Takenoshita S."/>
            <person name="Hagiwara K."/>
            <person name="Nagashima M."/>
            <person name="Gemma A."/>
            <person name="Bennett W.P."/>
            <person name="Harris C.C."/>
        </authorList>
    </citation>
    <scope>NUCLEOTIDE SEQUENCE [GENOMIC DNA] (ISOFORM 1)</scope>
    <scope>VARIANT ALA-439</scope>
</reference>
<reference key="5">
    <citation type="journal article" date="1996" name="Cancer Res.">
        <title>Genomic structure of the transforming growth factor beta type II receptor gene and its mutations in hereditary nonpolyposis colorectal cancers.</title>
        <authorList>
            <person name="Lu S.-L."/>
            <person name="Zhang W.C."/>
            <person name="Akiyama Y."/>
            <person name="Nomizu T."/>
            <person name="Yuasa Y."/>
        </authorList>
    </citation>
    <scope>NUCLEOTIDE SEQUENCE [GENOMIC DNA] (ISOFORM 1)</scope>
    <scope>VARIANT ALA-439</scope>
</reference>
<reference key="6">
    <citation type="journal article" date="1996" name="Gene">
        <title>Cloning of a cDNA encoding the human transforming growth factor-beta type II receptor: heterogeneity of the mRNA.</title>
        <authorList>
            <person name="Ogasa H."/>
            <person name="Noma T."/>
            <person name="Murata H."/>
            <person name="Kawai S."/>
            <person name="Nakazawa A."/>
        </authorList>
    </citation>
    <scope>NUCLEOTIDE SEQUENCE [MRNA] (ISOFORM 1)</scope>
    <scope>VARIANT ALA-439</scope>
    <source>
        <tissue>Liver</tissue>
    </source>
</reference>
<reference key="7">
    <citation type="journal article" date="2021" name="Front. Cell Dev. Biol.">
        <title>A Novel Splice Variant of Human TGF-beta Type II Receptor Encodes a Soluble Protein and Its Fc-Tagged Version Prevents Liver Fibrosis in vivo.</title>
        <authorList>
            <person name="Bertolio M.S."/>
            <person name="La Colla A."/>
            <person name="Carrea A."/>
            <person name="Romo A."/>
            <person name="Canziani G."/>
            <person name="Echarte S.M."/>
            <person name="Campisano S."/>
            <person name="Barletta G.P."/>
            <person name="Monzon A.M."/>
            <person name="Rodriguez T.M."/>
            <person name="Chisari A.N."/>
            <person name="Dewey R.A."/>
        </authorList>
    </citation>
    <scope>NUCLEOTIDE SEQUENCE [MRNA] (ISOFORM 3)</scope>
    <scope>FUNCTION (ISOFORM 3)</scope>
    <scope>SUBUNIT (ISOFORM 3)</scope>
    <scope>SUBCELLULAR LOCATION (ISOFORM 3)</scope>
    <source>
        <tissue evidence="45">Peripheral blood T-cell</tissue>
    </source>
</reference>
<reference key="8">
    <citation type="submission" date="2004-07" db="EMBL/GenBank/DDBJ databases">
        <authorList>
            <consortium name="NIEHS SNPs program"/>
        </authorList>
    </citation>
    <scope>NUCLEOTIDE SEQUENCE [GENOMIC DNA]</scope>
    <scope>VARIANT VAL-36</scope>
</reference>
<reference key="9">
    <citation type="journal article" date="2004" name="Nat. Genet.">
        <title>Complete sequencing and characterization of 21,243 full-length human cDNAs.</title>
        <authorList>
            <person name="Ota T."/>
            <person name="Suzuki Y."/>
            <person name="Nishikawa T."/>
            <person name="Otsuki T."/>
            <person name="Sugiyama T."/>
            <person name="Irie R."/>
            <person name="Wakamatsu A."/>
            <person name="Hayashi K."/>
            <person name="Sato H."/>
            <person name="Nagai K."/>
            <person name="Kimura K."/>
            <person name="Makita H."/>
            <person name="Sekine M."/>
            <person name="Obayashi M."/>
            <person name="Nishi T."/>
            <person name="Shibahara T."/>
            <person name="Tanaka T."/>
            <person name="Ishii S."/>
            <person name="Yamamoto J."/>
            <person name="Saito K."/>
            <person name="Kawai Y."/>
            <person name="Isono Y."/>
            <person name="Nakamura Y."/>
            <person name="Nagahari K."/>
            <person name="Murakami K."/>
            <person name="Yasuda T."/>
            <person name="Iwayanagi T."/>
            <person name="Wagatsuma M."/>
            <person name="Shiratori A."/>
            <person name="Sudo H."/>
            <person name="Hosoiri T."/>
            <person name="Kaku Y."/>
            <person name="Kodaira H."/>
            <person name="Kondo H."/>
            <person name="Sugawara M."/>
            <person name="Takahashi M."/>
            <person name="Kanda K."/>
            <person name="Yokoi T."/>
            <person name="Furuya T."/>
            <person name="Kikkawa E."/>
            <person name="Omura Y."/>
            <person name="Abe K."/>
            <person name="Kamihara K."/>
            <person name="Katsuta N."/>
            <person name="Sato K."/>
            <person name="Tanikawa M."/>
            <person name="Yamazaki M."/>
            <person name="Ninomiya K."/>
            <person name="Ishibashi T."/>
            <person name="Yamashita H."/>
            <person name="Murakawa K."/>
            <person name="Fujimori K."/>
            <person name="Tanai H."/>
            <person name="Kimata M."/>
            <person name="Watanabe M."/>
            <person name="Hiraoka S."/>
            <person name="Chiba Y."/>
            <person name="Ishida S."/>
            <person name="Ono Y."/>
            <person name="Takiguchi S."/>
            <person name="Watanabe S."/>
            <person name="Yosida M."/>
            <person name="Hotuta T."/>
            <person name="Kusano J."/>
            <person name="Kanehori K."/>
            <person name="Takahashi-Fujii A."/>
            <person name="Hara H."/>
            <person name="Tanase T.-O."/>
            <person name="Nomura Y."/>
            <person name="Togiya S."/>
            <person name="Komai F."/>
            <person name="Hara R."/>
            <person name="Takeuchi K."/>
            <person name="Arita M."/>
            <person name="Imose N."/>
            <person name="Musashino K."/>
            <person name="Yuuki H."/>
            <person name="Oshima A."/>
            <person name="Sasaki N."/>
            <person name="Aotsuka S."/>
            <person name="Yoshikawa Y."/>
            <person name="Matsunawa H."/>
            <person name="Ichihara T."/>
            <person name="Shiohata N."/>
            <person name="Sano S."/>
            <person name="Moriya S."/>
            <person name="Momiyama H."/>
            <person name="Satoh N."/>
            <person name="Takami S."/>
            <person name="Terashima Y."/>
            <person name="Suzuki O."/>
            <person name="Nakagawa S."/>
            <person name="Senoh A."/>
            <person name="Mizoguchi H."/>
            <person name="Goto Y."/>
            <person name="Shimizu F."/>
            <person name="Wakebe H."/>
            <person name="Hishigaki H."/>
            <person name="Watanabe T."/>
            <person name="Sugiyama A."/>
            <person name="Takemoto M."/>
            <person name="Kawakami B."/>
            <person name="Yamazaki M."/>
            <person name="Watanabe K."/>
            <person name="Kumagai A."/>
            <person name="Itakura S."/>
            <person name="Fukuzumi Y."/>
            <person name="Fujimori Y."/>
            <person name="Komiyama M."/>
            <person name="Tashiro H."/>
            <person name="Tanigami A."/>
            <person name="Fujiwara T."/>
            <person name="Ono T."/>
            <person name="Yamada K."/>
            <person name="Fujii Y."/>
            <person name="Ozaki K."/>
            <person name="Hirao M."/>
            <person name="Ohmori Y."/>
            <person name="Kawabata A."/>
            <person name="Hikiji T."/>
            <person name="Kobatake N."/>
            <person name="Inagaki H."/>
            <person name="Ikema Y."/>
            <person name="Okamoto S."/>
            <person name="Okitani R."/>
            <person name="Kawakami T."/>
            <person name="Noguchi S."/>
            <person name="Itoh T."/>
            <person name="Shigeta K."/>
            <person name="Senba T."/>
            <person name="Matsumura K."/>
            <person name="Nakajima Y."/>
            <person name="Mizuno T."/>
            <person name="Morinaga M."/>
            <person name="Sasaki M."/>
            <person name="Togashi T."/>
            <person name="Oyama M."/>
            <person name="Hata H."/>
            <person name="Watanabe M."/>
            <person name="Komatsu T."/>
            <person name="Mizushima-Sugano J."/>
            <person name="Satoh T."/>
            <person name="Shirai Y."/>
            <person name="Takahashi Y."/>
            <person name="Nakagawa K."/>
            <person name="Okumura K."/>
            <person name="Nagase T."/>
            <person name="Nomura N."/>
            <person name="Kikuchi H."/>
            <person name="Masuho Y."/>
            <person name="Yamashita R."/>
            <person name="Nakai K."/>
            <person name="Yada T."/>
            <person name="Nakamura Y."/>
            <person name="Ohara O."/>
            <person name="Isogai T."/>
            <person name="Sugano S."/>
        </authorList>
    </citation>
    <scope>NUCLEOTIDE SEQUENCE [LARGE SCALE MRNA] (ISOFORM 2)</scope>
    <source>
        <tissue>Placenta</tissue>
    </source>
</reference>
<reference key="10">
    <citation type="submission" date="2005-07" db="EMBL/GenBank/DDBJ databases">
        <authorList>
            <person name="Mural R.J."/>
            <person name="Istrail S."/>
            <person name="Sutton G.G."/>
            <person name="Florea L."/>
            <person name="Halpern A.L."/>
            <person name="Mobarry C.M."/>
            <person name="Lippert R."/>
            <person name="Walenz B."/>
            <person name="Shatkay H."/>
            <person name="Dew I."/>
            <person name="Miller J.R."/>
            <person name="Flanigan M.J."/>
            <person name="Edwards N.J."/>
            <person name="Bolanos R."/>
            <person name="Fasulo D."/>
            <person name="Halldorsson B.V."/>
            <person name="Hannenhalli S."/>
            <person name="Turner R."/>
            <person name="Yooseph S."/>
            <person name="Lu F."/>
            <person name="Nusskern D.R."/>
            <person name="Shue B.C."/>
            <person name="Zheng X.H."/>
            <person name="Zhong F."/>
            <person name="Delcher A.L."/>
            <person name="Huson D.H."/>
            <person name="Kravitz S.A."/>
            <person name="Mouchard L."/>
            <person name="Reinert K."/>
            <person name="Remington K.A."/>
            <person name="Clark A.G."/>
            <person name="Waterman M.S."/>
            <person name="Eichler E.E."/>
            <person name="Adams M.D."/>
            <person name="Hunkapiller M.W."/>
            <person name="Myers E.W."/>
            <person name="Venter J.C."/>
        </authorList>
    </citation>
    <scope>NUCLEOTIDE SEQUENCE [LARGE SCALE GENOMIC DNA]</scope>
</reference>
<reference key="11">
    <citation type="journal article" date="2004" name="Protein Sci.">
        <title>Signal peptide prediction based on analysis of experimentally verified cleavage sites.</title>
        <authorList>
            <person name="Zhang Z."/>
            <person name="Henzel W.J."/>
        </authorList>
    </citation>
    <scope>PROTEIN SEQUENCE OF 23-37</scope>
</reference>
<reference key="12">
    <citation type="journal article" date="1995" name="EMBO J.">
        <title>GS domain mutations that constitutively activate T beta R-I, the downstream signaling component in the TGF-beta receptor complex.</title>
        <authorList>
            <person name="Wieser R."/>
            <person name="Wrana J.L."/>
            <person name="Massague J."/>
        </authorList>
    </citation>
    <scope>FUNCTION IN PHOSPHORYLATION OF TGFBR1</scope>
</reference>
<reference key="13">
    <citation type="journal article" date="1996" name="Biochemistry">
        <title>Interaction of transforming growth factor beta receptors with apolipoprotein J/clusterin.</title>
        <authorList>
            <person name="Reddy K.B."/>
            <person name="Karode M.C."/>
            <person name="Harmony A.K."/>
            <person name="Howe P.H."/>
        </authorList>
    </citation>
    <scope>INTERACTION WITH CLU</scope>
</reference>
<reference key="14">
    <citation type="journal article" date="1996" name="Exp. Cell Res.">
        <title>A human transforming growth factor-beta type II receptor that contains an insertion in the extracellular domain.</title>
        <authorList>
            <person name="Hirai R."/>
            <person name="Fijita T."/>
        </authorList>
    </citation>
    <scope>ALTERNATIVE SPLICING (ISOFORM 2)</scope>
    <scope>FUNCTION (ISOFORMS 1 AND 2)</scope>
</reference>
<reference key="15">
    <citation type="journal article" date="1998" name="Cell">
        <title>SARA, a FYVE domain protein that recruits Smad2 to the TGFbeta receptor.</title>
        <authorList>
            <person name="Tsukazaki T."/>
            <person name="Chiang T.A."/>
            <person name="Davison A.F."/>
            <person name="Attisano L."/>
            <person name="Wrana J.L."/>
        </authorList>
    </citation>
    <scope>INTERACTION WITH ZFYVE9</scope>
</reference>
<reference key="16">
    <citation type="journal article" date="1998" name="J. Cell Biol.">
        <title>Oligomeric structure of type I and type II transforming growth factor beta receptors: homodimers form in the ER and persist at the plasma membrane.</title>
        <authorList>
            <person name="Gilboa L."/>
            <person name="Wells R.G."/>
            <person name="Lodish H.F."/>
            <person name="Henis Y.I."/>
        </authorList>
    </citation>
    <scope>HOMODIMERIZATION</scope>
</reference>
<reference key="17">
    <citation type="journal article" date="2001" name="Nat. Cell Biol.">
        <title>TGF-beta-induced apoptosis is mediated by the adapter protein Daxx that facilitates JNK activation.</title>
        <authorList>
            <person name="Perlman R."/>
            <person name="Schiemann W.P."/>
            <person name="Brooks M.W."/>
            <person name="Lodish H.F."/>
            <person name="Weinberg R.A."/>
        </authorList>
    </citation>
    <scope>INTERACTION WITH DAXX</scope>
    <scope>MUTAGENESIS OF LYS-277</scope>
</reference>
<reference key="18">
    <citation type="journal article" date="2003" name="EMBO J.">
        <title>TLP, a novel modulator of TGF-beta signaling, has opposite effects on Smad2- and Smad3-dependent signaling.</title>
        <authorList>
            <person name="Felici A."/>
            <person name="Wurthner J.U."/>
            <person name="Parks W.T."/>
            <person name="Giam L.R."/>
            <person name="Reiss M."/>
            <person name="Karpova T.S."/>
            <person name="McNally J.G."/>
            <person name="Roberts A.B."/>
        </authorList>
    </citation>
    <scope>INTERACTION WITH VPS39</scope>
</reference>
<reference key="19">
    <citation type="journal article" date="2006" name="J. Biol. Chem.">
        <title>Identification of Tctex2beta, a novel dynein light chain family member that interacts with different transforming growth factor-beta receptors.</title>
        <authorList>
            <person name="Meng Q.-J."/>
            <person name="Lux A."/>
            <person name="Holloschi A."/>
            <person name="Li J."/>
            <person name="Hughes J.M.X."/>
            <person name="Foerg T."/>
            <person name="McCarthy J.E.G."/>
            <person name="Heagerty A.M."/>
            <person name="Kioschis P."/>
            <person name="Hafner M."/>
            <person name="Garland J.M."/>
        </authorList>
    </citation>
    <scope>INTERACTION WITH DYNLT4</scope>
</reference>
<reference key="20">
    <citation type="journal article" date="2008" name="Mol. Cell">
        <title>Kinase-selective enrichment enables quantitative phosphoproteomics of the kinome across the cell cycle.</title>
        <authorList>
            <person name="Daub H."/>
            <person name="Olsen J.V."/>
            <person name="Bairlein M."/>
            <person name="Gnad F."/>
            <person name="Oppermann F.S."/>
            <person name="Korner R."/>
            <person name="Greff Z."/>
            <person name="Keri G."/>
            <person name="Stemmann O."/>
            <person name="Mann M."/>
        </authorList>
    </citation>
    <scope>PHOSPHORYLATION [LARGE SCALE ANALYSIS] AT SER-548</scope>
    <scope>IDENTIFICATION BY MASS SPECTROMETRY [LARGE SCALE ANALYSIS]</scope>
    <source>
        <tissue>Cervix carcinoma</tissue>
    </source>
</reference>
<reference key="21">
    <citation type="journal article" date="2009" name="Mol. Cell. Proteomics">
        <title>Large-scale proteomics analysis of the human kinome.</title>
        <authorList>
            <person name="Oppermann F.S."/>
            <person name="Gnad F."/>
            <person name="Olsen J.V."/>
            <person name="Hornberger R."/>
            <person name="Greff Z."/>
            <person name="Keri G."/>
            <person name="Mann M."/>
            <person name="Daub H."/>
        </authorList>
    </citation>
    <scope>IDENTIFICATION BY MASS SPECTROMETRY [LARGE SCALE ANALYSIS]</scope>
</reference>
<reference key="22">
    <citation type="journal article" date="2011" name="Mol. Cell. Biol.">
        <title>TSC-22 promotes transforming growth factor beta-mediated cardiac myofibroblast differentiation by antagonizing Smad7 activity.</title>
        <authorList>
            <person name="Yan X."/>
            <person name="Zhang J."/>
            <person name="Pan L."/>
            <person name="Wang P."/>
            <person name="Xue H."/>
            <person name="Zhang L."/>
            <person name="Gao X."/>
            <person name="Zhao X."/>
            <person name="Ning Y."/>
            <person name="Chen Y.G."/>
        </authorList>
    </citation>
    <scope>IDENTIFICATION IN A COMPLEX WITH TSC22D1 AND TGFBR1</scope>
</reference>
<reference key="23">
    <citation type="journal article" date="2011" name="Oncogene">
        <title>SCUBE3 is an endogenous TGF-beta receptor ligand and regulates the epithelial-mesenchymal transition in lung cancer.</title>
        <authorList>
            <person name="Wu Y.Y."/>
            <person name="Peck K."/>
            <person name="Chang Y.L."/>
            <person name="Pan S.H."/>
            <person name="Cheng Y.F."/>
            <person name="Lin J.C."/>
            <person name="Yang R.B."/>
            <person name="Hong T.M."/>
            <person name="Yang P.C."/>
        </authorList>
    </citation>
    <scope>INTERACTION WITH SCUBE3</scope>
</reference>
<reference key="24">
    <citation type="journal article" date="2013" name="J. Proteome Res.">
        <title>Toward a comprehensive characterization of a human cancer cell phosphoproteome.</title>
        <authorList>
            <person name="Zhou H."/>
            <person name="Di Palma S."/>
            <person name="Preisinger C."/>
            <person name="Peng M."/>
            <person name="Polat A.N."/>
            <person name="Heck A.J."/>
            <person name="Mohammed S."/>
        </authorList>
    </citation>
    <scope>PHOSPHORYLATION [LARGE SCALE ANALYSIS] AT SER-548</scope>
    <scope>IDENTIFICATION BY MASS SPECTROMETRY [LARGE SCALE ANALYSIS]</scope>
    <source>
        <tissue>Cervix carcinoma</tissue>
    </source>
</reference>
<reference key="25">
    <citation type="journal article" date="2014" name="J. Proteomics">
        <title>An enzyme assisted RP-RPLC approach for in-depth analysis of human liver phosphoproteome.</title>
        <authorList>
            <person name="Bian Y."/>
            <person name="Song C."/>
            <person name="Cheng K."/>
            <person name="Dong M."/>
            <person name="Wang F."/>
            <person name="Huang J."/>
            <person name="Sun D."/>
            <person name="Wang L."/>
            <person name="Ye M."/>
            <person name="Zou H."/>
        </authorList>
    </citation>
    <scope>PHOSPHORYLATION [LARGE SCALE ANALYSIS] AT SER-548</scope>
    <scope>IDENTIFICATION BY MASS SPECTROMETRY [LARGE SCALE ANALYSIS]</scope>
    <source>
        <tissue>Liver</tissue>
    </source>
</reference>
<reference key="26">
    <citation type="journal article" date="2016" name="Oncogene">
        <title>Syntenin regulates TGF-beta1-induced Smad activation and the epithelial-to-mesenchymal transition by inhibiting caveolin-mediated TGF-beta type I receptor internalization.</title>
        <authorList>
            <person name="Hwangbo C."/>
            <person name="Tae N."/>
            <person name="Lee S."/>
            <person name="Kim O."/>
            <person name="Park O.K."/>
            <person name="Kim J."/>
            <person name="Kwon S.H."/>
            <person name="Lee J.H."/>
        </authorList>
    </citation>
    <scope>SUBCELLULAR LOCATION</scope>
</reference>
<reference key="27">
    <citation type="journal article" date="2002" name="Nat. Struct. Biol.">
        <title>Crystal structure of the human TbetaR2 ectodomain--TGF-beta3 complex.</title>
        <authorList>
            <person name="Hart P.J."/>
            <person name="Deep S."/>
            <person name="Taylor A.B."/>
            <person name="Shu Z."/>
            <person name="Hinck C.S."/>
            <person name="Hinck A.P."/>
        </authorList>
    </citation>
    <scope>X-RAY CRYSTALLOGRAPHY (2.15 ANGSTROMS) OF 38-159 IN COMPLEX WITH TGF-BETA3</scope>
    <scope>DISULFIDE BONDS</scope>
</reference>
<reference key="28">
    <citation type="journal article" date="2002" name="Structure">
        <title>The 1.1 A crystal structure of human TGF-beta type II receptor ligand binding domain.</title>
        <authorList>
            <person name="Boesen C.C."/>
            <person name="Radaev S."/>
            <person name="Motyka S.A."/>
            <person name="Patamawenu A."/>
            <person name="Sun P.D."/>
        </authorList>
    </citation>
    <scope>X-RAY CRYSTALLOGRAPHY (1.05 ANGSTROMS) OF 49-159</scope>
    <scope>DISULFIDE BONDS</scope>
</reference>
<reference key="29">
    <citation type="journal article" date="2003" name="Biochemistry">
        <title>Solution structure and backbone dynamics of the TGFbeta type II receptor extracellular domain.</title>
        <authorList>
            <person name="Deep S."/>
            <person name="Walker K.P. III"/>
            <person name="Shu Z."/>
            <person name="Hinck A.P."/>
        </authorList>
    </citation>
    <scope>STRUCTURE BY NMR OF 38-159</scope>
    <scope>DISULFIDE BONDS</scope>
</reference>
<reference key="30">
    <citation type="journal article" date="2008" name="Mol. Cell">
        <title>Cooperative assembly of TGF-beta superfamily signaling complexes is mediated by two disparate mechanisms and distinct modes of receptor binding.</title>
        <authorList>
            <person name="Groppe J."/>
            <person name="Hinck C.S."/>
            <person name="Samavarchi-Tehrani P."/>
            <person name="Zubieta C."/>
            <person name="Schuermann J.P."/>
            <person name="Taylor A.B."/>
            <person name="Schwarz P.M."/>
            <person name="Wrana J.L."/>
            <person name="Hinck A.P."/>
        </authorList>
    </citation>
    <scope>X-RAY CRYSTALLOGRAPHY (3.00 ANGSTROMS) OF 43-149 IN COMPLEX WITH TGFBR1 AND TGFB3</scope>
    <scope>DISULFIDE BONDS</scope>
</reference>
<reference key="31">
    <citation type="journal article" date="2010" name="J. Biol. Chem.">
        <title>Ternary complex of transforming growth factor-beta1 reveals isoform-specific ligand recognition and receptor recruitment in the superfamily.</title>
        <authorList>
            <person name="Radaev S."/>
            <person name="Zou Z."/>
            <person name="Huang T."/>
            <person name="Lafer E.M."/>
            <person name="Hinck A.P."/>
            <person name="Sun P.D."/>
        </authorList>
    </citation>
    <scope>X-RAY CRYSTALLOGRAPHY (3.00 ANGSTROMS) OF 38-153 IN COMPLEX WITH TGFBR1 AND TGFB1</scope>
    <scope>RECEPTOR AFFINITY FOR LIGANDS</scope>
    <scope>DISULFIDE BONDS</scope>
</reference>
<reference key="32">
    <citation type="journal article" date="1998" name="Nat. Genet.">
        <title>HNPCC associated with germline mutation in the TGF-beta type II receptor gene.</title>
        <authorList>
            <person name="Lu S.-L."/>
            <person name="Kawabata M."/>
            <person name="Imamura T."/>
            <person name="Akiyama Y."/>
            <person name="Nomizu T."/>
            <person name="Miyazono K."/>
            <person name="Yuasa Y."/>
        </authorList>
    </citation>
    <scope>VARIANT HNPCC6 MET-315</scope>
</reference>
<reference key="33">
    <citation type="journal article" date="2000" name="Br. J. Cancer">
        <title>A dominant negative mutation of transforming growth factor-beta receptor type II gene in microsatellite stable oesophageal carcinoma.</title>
        <authorList>
            <person name="Tanaka S."/>
            <person name="Mori M."/>
            <person name="Mafune K."/>
            <person name="Ohno S."/>
            <person name="Sugimachi K."/>
        </authorList>
    </citation>
    <scope>VARIANT ESOPHAGEAL CANCER GLN-526</scope>
</reference>
<reference key="34">
    <citation type="journal article" date="2001" name="Cancer Res.">
        <title>Inhibiting mutations in the transforming growth factor beta type 2 receptor in recurrent human breast cancer.</title>
        <authorList>
            <person name="Luecke C.D."/>
            <person name="Philpott A."/>
            <person name="Metcalfe J.C."/>
            <person name="Thompson A.M."/>
            <person name="Hughes-Davies L."/>
            <person name="Kemp P.R."/>
            <person name="Hesketh R."/>
        </authorList>
    </citation>
    <scope>VARIANTS BREAST TUMOR MET-387; SER-435; ALA-447 AND MET-452</scope>
    <scope>CHARACTERIZATION OF VARIANTS BREAST TUMOR SER-435; ALA-447 AND MET-452</scope>
</reference>
<reference key="35">
    <citation type="journal article" date="2002" name="J. Hum. Genet.">
        <title>A catalog of 106 single-nucleotide polymorphisms (SNPs) and 11 other types of variations in genes for transforming growth factor-beta1 (TGF-beta1) and its signaling pathway.</title>
        <authorList>
            <person name="Watanabe Y."/>
            <person name="Kinoshita A."/>
            <person name="Yamada T."/>
            <person name="Ohta T."/>
            <person name="Kishino T."/>
            <person name="Matsumoto N."/>
            <person name="Ishikawa M."/>
            <person name="Niikawa N."/>
            <person name="Yoshiura K."/>
        </authorList>
    </citation>
    <scope>VARIANT ILE-191</scope>
</reference>
<reference key="36">
    <citation type="journal article" date="2004" name="Nat. Genet.">
        <title>Heterozygous TGFBR2 mutations in Marfan syndrome.</title>
        <authorList>
            <person name="Mizuguchi T."/>
            <person name="Collod-Beroud G."/>
            <person name="Akiyama T."/>
            <person name="Abifadel M."/>
            <person name="Harada N."/>
            <person name="Morisaki T."/>
            <person name="Allard D."/>
            <person name="Varret M."/>
            <person name="Claustres M."/>
            <person name="Morisaki H."/>
            <person name="Ihara M."/>
            <person name="Kinoshita A."/>
            <person name="Yoshiura K."/>
            <person name="Junien C."/>
            <person name="Kajii T."/>
            <person name="Jondeau G."/>
            <person name="Ohta T."/>
            <person name="Kishino T."/>
            <person name="Furukawa Y."/>
            <person name="Nakamura Y."/>
            <person name="Niikawa N."/>
            <person name="Boileau C."/>
            <person name="Matsumoto N."/>
        </authorList>
    </citation>
    <scope>VARIANTS LDS2 PRO-308; PHE-449 AND CYS-537</scope>
    <scope>CHARACTERIZATION OF VARIANTS LDS2 PRO-308; PHE-449 AND CYS-537</scope>
</reference>
<reference key="37">
    <citation type="journal article" date="2005" name="Circulation">
        <title>Mutations in transforming growth factor-beta receptor type II cause familial thoracic aortic aneurysms and dissections.</title>
        <authorList>
            <person name="Pannu H."/>
            <person name="Fadulu V.T."/>
            <person name="Chang J."/>
            <person name="Lafont A."/>
            <person name="Hasham S.N."/>
            <person name="Sparks E."/>
            <person name="Giampietro P.F."/>
            <person name="Zaleski C."/>
            <person name="Estrera A.L."/>
            <person name="Safi H.J."/>
            <person name="Shete S."/>
            <person name="Willing M.C."/>
            <person name="Raman C.S."/>
            <person name="Milewicz D.M."/>
        </authorList>
    </citation>
    <scope>VARIANTS LDS2 CYS-460 AND HIS-460</scope>
</reference>
<reference key="38">
    <citation type="journal article" date="2005" name="Nat. Genet.">
        <title>A syndrome of altered cardiovascular, craniofacial, neurocognitive and skeletal development caused by mutations in TGFBR1 or TGFBR2.</title>
        <authorList>
            <person name="Loeys B.L."/>
            <person name="Chen J."/>
            <person name="Neptune E.R."/>
            <person name="Judge D.P."/>
            <person name="Podowski M."/>
            <person name="Holm T."/>
            <person name="Meyers J."/>
            <person name="Leitch C.C."/>
            <person name="Katsanis N."/>
            <person name="Sharifi N."/>
            <person name="Xu F.L."/>
            <person name="Myers L.A."/>
            <person name="Spevak P.J."/>
            <person name="Cameron D.E."/>
            <person name="De Backer J.F."/>
            <person name="Hellemans J."/>
            <person name="Chen Y."/>
            <person name="Davis E.C."/>
            <person name="Webb C.L."/>
            <person name="Kress W."/>
            <person name="Coucke P.J."/>
            <person name="Rifkin D.B."/>
            <person name="De Paepe A.M."/>
            <person name="Dietz H.C."/>
        </authorList>
    </citation>
    <scope>VARIANTS LDS2 ASN-336; PRO-355; TRP-357; HIS-528 AND CYS-528</scope>
</reference>
<reference key="39">
    <citation type="journal article" date="2006" name="Eur. J. Hum. Genet.">
        <title>Two novel and one known mutation of the TGFBR2 gene in Marfan syndrome not associated with FBN1 gene defects.</title>
        <authorList>
            <person name="Disabella E."/>
            <person name="Grasso M."/>
            <person name="Marziliano N."/>
            <person name="Ansaldi S."/>
            <person name="Lucchelli C."/>
            <person name="Porcu E."/>
            <person name="Tagliani M."/>
            <person name="Pilotto A."/>
            <person name="Diegoli M."/>
            <person name="Lanzarini L."/>
            <person name="Malattia C."/>
            <person name="Pelliccia A."/>
            <person name="Ficcadenti A."/>
            <person name="Gabrielli O."/>
            <person name="Arbustini E."/>
        </authorList>
    </citation>
    <scope>VARIANT LDS2 ASN-446</scope>
</reference>
<reference key="40">
    <citation type="journal article" date="2006" name="Science">
        <title>The consensus coding sequences of human breast and colorectal cancers.</title>
        <authorList>
            <person name="Sjoeblom T."/>
            <person name="Jones S."/>
            <person name="Wood L.D."/>
            <person name="Parsons D.W."/>
            <person name="Lin J."/>
            <person name="Barber T.D."/>
            <person name="Mandelker D."/>
            <person name="Leary R.J."/>
            <person name="Ptak J."/>
            <person name="Silliman N."/>
            <person name="Szabo S."/>
            <person name="Buckhaults P."/>
            <person name="Farrell C."/>
            <person name="Meeh P."/>
            <person name="Markowitz S.D."/>
            <person name="Willis J."/>
            <person name="Dawson D."/>
            <person name="Willson J.K.V."/>
            <person name="Gazdar A.F."/>
            <person name="Hartigan J."/>
            <person name="Wu L."/>
            <person name="Liu C."/>
            <person name="Parmigiani G."/>
            <person name="Park B.H."/>
            <person name="Bachman K.E."/>
            <person name="Papadopoulos N."/>
            <person name="Vogelstein B."/>
            <person name="Kinzler K.W."/>
            <person name="Velculescu V.E."/>
        </authorList>
    </citation>
    <scope>VARIANTS [LARGE SCALE ANALYSIS] VAL-73 AND HIS-528</scope>
</reference>
<reference key="41">
    <citation type="journal article" date="2007" name="Nature">
        <title>Patterns of somatic mutation in human cancer genomes.</title>
        <authorList>
            <person name="Greenman C."/>
            <person name="Stephens P."/>
            <person name="Smith R."/>
            <person name="Dalgliesh G.L."/>
            <person name="Hunter C."/>
            <person name="Bignell G."/>
            <person name="Davies H."/>
            <person name="Teague J."/>
            <person name="Butler A."/>
            <person name="Stevens C."/>
            <person name="Edkins S."/>
            <person name="O'Meara S."/>
            <person name="Vastrik I."/>
            <person name="Schmidt E.E."/>
            <person name="Avis T."/>
            <person name="Barthorpe S."/>
            <person name="Bhamra G."/>
            <person name="Buck G."/>
            <person name="Choudhury B."/>
            <person name="Clements J."/>
            <person name="Cole J."/>
            <person name="Dicks E."/>
            <person name="Forbes S."/>
            <person name="Gray K."/>
            <person name="Halliday K."/>
            <person name="Harrison R."/>
            <person name="Hills K."/>
            <person name="Hinton J."/>
            <person name="Jenkinson A."/>
            <person name="Jones D."/>
            <person name="Menzies A."/>
            <person name="Mironenko T."/>
            <person name="Perry J."/>
            <person name="Raine K."/>
            <person name="Richardson D."/>
            <person name="Shepherd R."/>
            <person name="Small A."/>
            <person name="Tofts C."/>
            <person name="Varian J."/>
            <person name="Webb T."/>
            <person name="West S."/>
            <person name="Widaa S."/>
            <person name="Yates A."/>
            <person name="Cahill D.P."/>
            <person name="Louis D.N."/>
            <person name="Goldstraw P."/>
            <person name="Nicholson A.G."/>
            <person name="Brasseur F."/>
            <person name="Looijenga L."/>
            <person name="Weber B.L."/>
            <person name="Chiew Y.-E."/>
            <person name="DeFazio A."/>
            <person name="Greaves M.F."/>
            <person name="Green A.R."/>
            <person name="Campbell P."/>
            <person name="Birney E."/>
            <person name="Easton D.F."/>
            <person name="Chenevix-Trench G."/>
            <person name="Tan M.-H."/>
            <person name="Khoo S.K."/>
            <person name="Teh B.T."/>
            <person name="Yuen S.T."/>
            <person name="Leung S.Y."/>
            <person name="Wooster R."/>
            <person name="Futreal P.A."/>
            <person name="Stratton M.R."/>
        </authorList>
    </citation>
    <scope>VARIANTS [LARGE SCALE ANALYSIS] ARG-61; ILE-191; MET-315; TYR-328; ILE-373; MET-387 AND SER-490</scope>
</reference>
<reference key="42">
    <citation type="journal article" date="2009" name="Am. J. Med. Genet. A">
        <title>Identification of novel FBN1 and TGFBR2 mutations in 65 probands with Marfan syndrome or Marfan-like phenotypes.</title>
        <authorList>
            <person name="Chung B.H."/>
            <person name="Lam S.T."/>
            <person name="Tong T.M."/>
            <person name="Li S.Y."/>
            <person name="Lun K.S."/>
            <person name="Chan D.H."/>
            <person name="Fok S.F."/>
            <person name="Or J.S."/>
            <person name="Smith D.K."/>
            <person name="Yang W."/>
            <person name="Lau Y.L."/>
        </authorList>
    </citation>
    <scope>VARIANTS LDS2 HIS-190; VAL-247; PRO-325; ARG-357 AND ILE-530</scope>
</reference>
<reference key="43">
    <citation type="journal article" date="2009" name="Orphanet J. Rare Dis.">
        <title>Loeys-Dietz syndrome type I and type II: clinical findings and novel mutations in two Italian patients.</title>
        <authorList>
            <person name="Drera B."/>
            <person name="Ritelli M."/>
            <person name="Zoppi N."/>
            <person name="Wischmeijer A."/>
            <person name="Gnoli M."/>
            <person name="Fattori R."/>
            <person name="Calzavara-Pinton P.G."/>
            <person name="Barlati S."/>
            <person name="Colombi M."/>
        </authorList>
    </citation>
    <scope>VARIANT LDS2 SER-510</scope>
</reference>
<reference key="44">
    <citation type="journal article" date="2010" name="Am. J. Med. Genet. A">
        <title>Progressive aortic root and pulmonary artery aneurysms in a neonate with Loeys-Dietz syndrome type 1B.</title>
        <authorList>
            <person name="Muramatsu Y."/>
            <person name="Kosho T."/>
            <person name="Magota M."/>
            <person name="Yokotsuka T."/>
            <person name="Ito M."/>
            <person name="Yasuda A."/>
            <person name="Kito O."/>
            <person name="Suzuki C."/>
            <person name="Nagata Y."/>
            <person name="Kawai S."/>
            <person name="Ikoma M."/>
            <person name="Hatano T."/>
            <person name="Nakayama M."/>
            <person name="Kawamura R."/>
            <person name="Wakui K."/>
            <person name="Morisaki H."/>
            <person name="Morisaki T."/>
            <person name="Fukushima Y."/>
        </authorList>
    </citation>
    <scope>VARIANT LDS2 LYS-457</scope>
</reference>
<reference key="45">
    <citation type="journal article" date="2010" name="Am. J. Med. Genet. A">
        <title>Germline TGF-beta receptor mutations and skeletal fragility: a report on two patients with Loeys-Dietz syndrome.</title>
        <authorList>
            <person name="Kirmani S."/>
            <person name="Tebben P.J."/>
            <person name="Lteif A.N."/>
            <person name="Gordon D."/>
            <person name="Clarke B.L."/>
            <person name="Hefferan T.E."/>
            <person name="Yaszemski M.J."/>
            <person name="McGrann P.S."/>
            <person name="Lindor N.M."/>
            <person name="Ellison J.W."/>
        </authorList>
    </citation>
    <scope>VARIANTS LDS2 PRO-308 AND ARG-521</scope>
</reference>
<reference key="46">
    <citation type="journal article" date="2012" name="J. Hum. Genet.">
        <title>Clinical features and genetic analysis of Korean patients with Loeys-Dietz syndrome.</title>
        <authorList>
            <person name="Yang J.H."/>
            <person name="Ki C.S."/>
            <person name="Han H."/>
            <person name="Song B.G."/>
            <person name="Jang S.Y."/>
            <person name="Chung T.Y."/>
            <person name="Sung K."/>
            <person name="Lee H.J."/>
            <person name="Kim D.K."/>
        </authorList>
    </citation>
    <scope>VARIANTS LDS2 GLN-306 DELINS HIS-GLU; ARG-377; PHE-449 AND ARG-514</scope>
</reference>
<reference key="47">
    <citation type="journal article" date="2011" name="Korean J. Pediatr.">
        <title>A sporadic case of Loeys-Dietz syndrome type I with two novel mutations of the TGFBR2 gene.</title>
        <authorList>
            <person name="Ha J.S."/>
            <person name="Kim Y.H."/>
        </authorList>
    </citation>
    <scope>VARIANTS LDS2 VAL-509 AND PHE-510</scope>
</reference>
<dbReference type="EC" id="2.7.11.30"/>
<dbReference type="EMBL" id="M85079">
    <property type="protein sequence ID" value="AAA61164.1"/>
    <property type="molecule type" value="mRNA"/>
</dbReference>
<dbReference type="EMBL" id="D28131">
    <property type="protein sequence ID" value="BAA05673.1"/>
    <property type="molecule type" value="mRNA"/>
</dbReference>
<dbReference type="EMBL" id="U52246">
    <property type="protein sequence ID" value="AAB17553.1"/>
    <property type="molecule type" value="Genomic_DNA"/>
</dbReference>
<dbReference type="EMBL" id="U52240">
    <property type="protein sequence ID" value="AAB17553.1"/>
    <property type="status" value="JOINED"/>
    <property type="molecule type" value="Genomic_DNA"/>
</dbReference>
<dbReference type="EMBL" id="U52241">
    <property type="protein sequence ID" value="AAB17553.1"/>
    <property type="status" value="JOINED"/>
    <property type="molecule type" value="Genomic_DNA"/>
</dbReference>
<dbReference type="EMBL" id="U52242">
    <property type="protein sequence ID" value="AAB17553.1"/>
    <property type="status" value="JOINED"/>
    <property type="molecule type" value="Genomic_DNA"/>
</dbReference>
<dbReference type="EMBL" id="U52244">
    <property type="protein sequence ID" value="AAB17553.1"/>
    <property type="status" value="JOINED"/>
    <property type="molecule type" value="Genomic_DNA"/>
</dbReference>
<dbReference type="EMBL" id="U52245">
    <property type="protein sequence ID" value="AAB17553.1"/>
    <property type="status" value="JOINED"/>
    <property type="molecule type" value="Genomic_DNA"/>
</dbReference>
<dbReference type="EMBL" id="U69152">
    <property type="protein sequence ID" value="AAB40916.1"/>
    <property type="molecule type" value="Genomic_DNA"/>
</dbReference>
<dbReference type="EMBL" id="U69146">
    <property type="protein sequence ID" value="AAB40916.1"/>
    <property type="status" value="JOINED"/>
    <property type="molecule type" value="Genomic_DNA"/>
</dbReference>
<dbReference type="EMBL" id="U69147">
    <property type="protein sequence ID" value="AAB40916.1"/>
    <property type="status" value="JOINED"/>
    <property type="molecule type" value="Genomic_DNA"/>
</dbReference>
<dbReference type="EMBL" id="U69148">
    <property type="protein sequence ID" value="AAB40916.1"/>
    <property type="status" value="JOINED"/>
    <property type="molecule type" value="Genomic_DNA"/>
</dbReference>
<dbReference type="EMBL" id="U69149">
    <property type="protein sequence ID" value="AAB40916.1"/>
    <property type="status" value="JOINED"/>
    <property type="molecule type" value="Genomic_DNA"/>
</dbReference>
<dbReference type="EMBL" id="U69150">
    <property type="protein sequence ID" value="AAB40916.1"/>
    <property type="status" value="JOINED"/>
    <property type="molecule type" value="Genomic_DNA"/>
</dbReference>
<dbReference type="EMBL" id="U69151">
    <property type="protein sequence ID" value="AAB40916.1"/>
    <property type="status" value="JOINED"/>
    <property type="molecule type" value="Genomic_DNA"/>
</dbReference>
<dbReference type="EMBL" id="D50683">
    <property type="protein sequence ID" value="BAA09332.1"/>
    <property type="molecule type" value="mRNA"/>
</dbReference>
<dbReference type="EMBL" id="MW881156">
    <property type="protein sequence ID" value="UDE22710.1"/>
    <property type="molecule type" value="mRNA"/>
</dbReference>
<dbReference type="EMBL" id="AY675319">
    <property type="protein sequence ID" value="AAT70724.1"/>
    <property type="molecule type" value="Genomic_DNA"/>
</dbReference>
<dbReference type="EMBL" id="AK300383">
    <property type="protein sequence ID" value="BAG62117.1"/>
    <property type="molecule type" value="mRNA"/>
</dbReference>
<dbReference type="EMBL" id="CH471055">
    <property type="protein sequence ID" value="EAW64412.1"/>
    <property type="molecule type" value="Genomic_DNA"/>
</dbReference>
<dbReference type="CCDS" id="CCDS2648.1">
    <molecule id="P37173-1"/>
</dbReference>
<dbReference type="CCDS" id="CCDS33727.1">
    <molecule id="P37173-2"/>
</dbReference>
<dbReference type="PIR" id="A42100">
    <property type="entry name" value="A42100"/>
</dbReference>
<dbReference type="RefSeq" id="NP_001020018.1">
    <molecule id="P37173-2"/>
    <property type="nucleotide sequence ID" value="NM_001024847.3"/>
</dbReference>
<dbReference type="RefSeq" id="NP_003233.4">
    <molecule id="P37173-1"/>
    <property type="nucleotide sequence ID" value="NM_003242.5"/>
</dbReference>
<dbReference type="PDB" id="1KTZ">
    <property type="method" value="X-ray"/>
    <property type="resolution" value="2.15 A"/>
    <property type="chains" value="B=38-159"/>
</dbReference>
<dbReference type="PDB" id="1M9Z">
    <property type="method" value="X-ray"/>
    <property type="resolution" value="1.05 A"/>
    <property type="chains" value="A=49-159"/>
</dbReference>
<dbReference type="PDB" id="1PLO">
    <property type="method" value="NMR"/>
    <property type="chains" value="A=38-159"/>
</dbReference>
<dbReference type="PDB" id="2PJY">
    <property type="method" value="X-ray"/>
    <property type="resolution" value="3.00 A"/>
    <property type="chains" value="B=42-149"/>
</dbReference>
<dbReference type="PDB" id="3KFD">
    <property type="method" value="X-ray"/>
    <property type="resolution" value="3.00 A"/>
    <property type="chains" value="E/F/G/H=38-153"/>
</dbReference>
<dbReference type="PDB" id="4P7U">
    <property type="method" value="X-ray"/>
    <property type="resolution" value="1.50 A"/>
    <property type="chains" value="A=49-159"/>
</dbReference>
<dbReference type="PDB" id="4XJJ">
    <property type="method" value="X-ray"/>
    <property type="resolution" value="1.40 A"/>
    <property type="chains" value="A=50-159"/>
</dbReference>
<dbReference type="PDB" id="5E8V">
    <property type="method" value="X-ray"/>
    <property type="resolution" value="1.69 A"/>
    <property type="chains" value="A=237-549"/>
</dbReference>
<dbReference type="PDB" id="5E8Y">
    <property type="method" value="X-ray"/>
    <property type="resolution" value="2.05 A"/>
    <property type="chains" value="A=237-549"/>
</dbReference>
<dbReference type="PDB" id="5E91">
    <property type="method" value="X-ray"/>
    <property type="resolution" value="2.42 A"/>
    <property type="chains" value="A=237-549"/>
</dbReference>
<dbReference type="PDB" id="5E92">
    <property type="method" value="X-ray"/>
    <property type="resolution" value="2.08 A"/>
    <property type="chains" value="A=237-549"/>
</dbReference>
<dbReference type="PDB" id="5QIN">
    <property type="method" value="X-ray"/>
    <property type="resolution" value="1.57 A"/>
    <property type="chains" value="A=237-549"/>
</dbReference>
<dbReference type="PDB" id="5TX4">
    <property type="method" value="X-ray"/>
    <property type="resolution" value="1.88 A"/>
    <property type="chains" value="A=38-153"/>
</dbReference>
<dbReference type="PDB" id="5TY4">
    <property type="method" value="EM"/>
    <property type="resolution" value="2.90 A"/>
    <property type="chains" value="A=47-149"/>
</dbReference>
<dbReference type="PDB" id="7DV6">
    <property type="method" value="X-ray"/>
    <property type="resolution" value="2.39 A"/>
    <property type="chains" value="A=237-549"/>
</dbReference>
<dbReference type="PDB" id="8G4K">
    <property type="method" value="X-ray"/>
    <property type="resolution" value="1.24 A"/>
    <property type="chains" value="B=45-155"/>
</dbReference>
<dbReference type="PDB" id="8YGZ">
    <property type="method" value="X-ray"/>
    <property type="resolution" value="2.10 A"/>
    <property type="chains" value="A=237-549"/>
</dbReference>
<dbReference type="PDB" id="9B9F">
    <property type="method" value="X-ray"/>
    <property type="resolution" value="3.00 A"/>
    <property type="chains" value="D/I=42-153"/>
</dbReference>
<dbReference type="PDB" id="9E9G">
    <property type="method" value="X-ray"/>
    <property type="resolution" value="1.40 A"/>
    <property type="chains" value="A=38-154"/>
</dbReference>
<dbReference type="PDB" id="9FDY">
    <property type="method" value="EM"/>
    <property type="resolution" value="3.40 A"/>
    <property type="chains" value="D/E=42-153"/>
</dbReference>
<dbReference type="PDB" id="9FK5">
    <property type="method" value="EM"/>
    <property type="resolution" value="4.10 A"/>
    <property type="chains" value="D=42-153"/>
</dbReference>
<dbReference type="PDB" id="9FKP">
    <property type="method" value="EM"/>
    <property type="resolution" value="3.72 A"/>
    <property type="chains" value="D/E=42-153"/>
</dbReference>
<dbReference type="PDBsum" id="1KTZ"/>
<dbReference type="PDBsum" id="1M9Z"/>
<dbReference type="PDBsum" id="1PLO"/>
<dbReference type="PDBsum" id="2PJY"/>
<dbReference type="PDBsum" id="3KFD"/>
<dbReference type="PDBsum" id="4P7U"/>
<dbReference type="PDBsum" id="4XJJ"/>
<dbReference type="PDBsum" id="5E8V"/>
<dbReference type="PDBsum" id="5E8Y"/>
<dbReference type="PDBsum" id="5E91"/>
<dbReference type="PDBsum" id="5E92"/>
<dbReference type="PDBsum" id="5QIN"/>
<dbReference type="PDBsum" id="5TX4"/>
<dbReference type="PDBsum" id="5TY4"/>
<dbReference type="PDBsum" id="7DV6"/>
<dbReference type="PDBsum" id="8G4K"/>
<dbReference type="PDBsum" id="8YGZ"/>
<dbReference type="PDBsum" id="9B9F"/>
<dbReference type="PDBsum" id="9E9G"/>
<dbReference type="PDBsum" id="9FDY"/>
<dbReference type="PDBsum" id="9FK5"/>
<dbReference type="PDBsum" id="9FKP"/>
<dbReference type="BMRB" id="P37173"/>
<dbReference type="EMDB" id="EMD-50333"/>
<dbReference type="EMDB" id="EMD-50519"/>
<dbReference type="EMDB" id="EMD-50524"/>
<dbReference type="EMDB" id="EMD-8472"/>
<dbReference type="SMR" id="P37173"/>
<dbReference type="BioGRID" id="112906">
    <property type="interactions" value="196"/>
</dbReference>
<dbReference type="ComplexPortal" id="CPX-2544">
    <property type="entry name" value="TGF-beta-3-TGFR complex"/>
</dbReference>
<dbReference type="ComplexPortal" id="CPX-529">
    <property type="entry name" value="TGF-beta-1-TGFR complex"/>
</dbReference>
<dbReference type="ComplexPortal" id="CPX-834">
    <property type="entry name" value="TGF-beta-2-TGFR complex"/>
</dbReference>
<dbReference type="CORUM" id="P37173"/>
<dbReference type="DIP" id="DIP-5939N"/>
<dbReference type="FunCoup" id="P37173">
    <property type="interactions" value="1304"/>
</dbReference>
<dbReference type="IntAct" id="P37173">
    <property type="interactions" value="157"/>
</dbReference>
<dbReference type="MINT" id="P37173"/>
<dbReference type="STRING" id="9606.ENSP00000351905"/>
<dbReference type="BindingDB" id="P37173"/>
<dbReference type="ChEMBL" id="CHEMBL4267"/>
<dbReference type="DrugBank" id="DB10770">
    <property type="generic name" value="Foreskin fibroblast (neonatal)"/>
</dbReference>
<dbReference type="DrugBank" id="DB10772">
    <property type="generic name" value="Foreskin keratinocyte (neonatal)"/>
</dbReference>
<dbReference type="DrugBank" id="DB12010">
    <property type="generic name" value="Fostamatinib"/>
</dbReference>
<dbReference type="DrugCentral" id="P37173"/>
<dbReference type="GuidetoPHARMACOLOGY" id="1795"/>
<dbReference type="GlyConnect" id="1979">
    <property type="glycosylation" value="9 N-Linked glycans (3 sites)"/>
</dbReference>
<dbReference type="GlyCosmos" id="P37173">
    <property type="glycosylation" value="5 sites, 9 glycans"/>
</dbReference>
<dbReference type="GlyGen" id="P37173">
    <property type="glycosylation" value="7 sites, 11 N-linked glycans (3 sites), 1 O-linked glycan (2 sites)"/>
</dbReference>
<dbReference type="iPTMnet" id="P37173"/>
<dbReference type="PhosphoSitePlus" id="P37173"/>
<dbReference type="SwissPalm" id="P37173"/>
<dbReference type="BioMuta" id="TGFBR2"/>
<dbReference type="DMDM" id="116242818"/>
<dbReference type="jPOST" id="P37173"/>
<dbReference type="MassIVE" id="P37173"/>
<dbReference type="PaxDb" id="9606-ENSP00000351905"/>
<dbReference type="PeptideAtlas" id="P37173"/>
<dbReference type="ProteomicsDB" id="55264">
    <molecule id="P37173-1"/>
</dbReference>
<dbReference type="ProteomicsDB" id="55265">
    <molecule id="P37173-2"/>
</dbReference>
<dbReference type="Pumba" id="P37173"/>
<dbReference type="Antibodypedia" id="11570">
    <property type="antibodies" value="806 antibodies from 41 providers"/>
</dbReference>
<dbReference type="DNASU" id="7048"/>
<dbReference type="Ensembl" id="ENST00000295754.10">
    <molecule id="P37173-1"/>
    <property type="protein sequence ID" value="ENSP00000295754.5"/>
    <property type="gene ID" value="ENSG00000163513.20"/>
</dbReference>
<dbReference type="Ensembl" id="ENST00000359013.4">
    <molecule id="P37173-2"/>
    <property type="protein sequence ID" value="ENSP00000351905.4"/>
    <property type="gene ID" value="ENSG00000163513.20"/>
</dbReference>
<dbReference type="GeneID" id="7048"/>
<dbReference type="KEGG" id="hsa:7048"/>
<dbReference type="MANE-Select" id="ENST00000295754.10">
    <property type="protein sequence ID" value="ENSP00000295754.5"/>
    <property type="RefSeq nucleotide sequence ID" value="NM_003242.6"/>
    <property type="RefSeq protein sequence ID" value="NP_003233.4"/>
</dbReference>
<dbReference type="UCSC" id="uc003cen.4">
    <molecule id="P37173-1"/>
    <property type="organism name" value="human"/>
</dbReference>
<dbReference type="AGR" id="HGNC:11773"/>
<dbReference type="CTD" id="7048"/>
<dbReference type="DisGeNET" id="7048"/>
<dbReference type="GeneCards" id="TGFBR2"/>
<dbReference type="GeneReviews" id="TGFBR2"/>
<dbReference type="HGNC" id="HGNC:11773">
    <property type="gene designation" value="TGFBR2"/>
</dbReference>
<dbReference type="HPA" id="ENSG00000163513">
    <property type="expression patterns" value="Low tissue specificity"/>
</dbReference>
<dbReference type="MalaCards" id="TGFBR2"/>
<dbReference type="MIM" id="133239">
    <property type="type" value="phenotype"/>
</dbReference>
<dbReference type="MIM" id="190182">
    <property type="type" value="gene"/>
</dbReference>
<dbReference type="MIM" id="610168">
    <property type="type" value="phenotype"/>
</dbReference>
<dbReference type="MIM" id="614331">
    <property type="type" value="phenotype"/>
</dbReference>
<dbReference type="neXtProt" id="NX_P37173"/>
<dbReference type="OpenTargets" id="ENSG00000163513"/>
<dbReference type="Orphanet" id="91387">
    <property type="disease" value="Familial thoracic aortic aneurysm and aortic dissection"/>
</dbReference>
<dbReference type="Orphanet" id="60030">
    <property type="disease" value="Loeys-Dietz syndrome"/>
</dbReference>
<dbReference type="Orphanet" id="144">
    <property type="disease" value="Lynch syndrome"/>
</dbReference>
<dbReference type="Orphanet" id="284973">
    <property type="disease" value="Marfan syndrome type 2"/>
</dbReference>
<dbReference type="Orphanet" id="99977">
    <property type="disease" value="Squamous cell carcinoma of the esophagus"/>
</dbReference>
<dbReference type="PharmGKB" id="PA36486"/>
<dbReference type="VEuPathDB" id="HostDB:ENSG00000163513"/>
<dbReference type="eggNOG" id="KOG3653">
    <property type="taxonomic scope" value="Eukaryota"/>
</dbReference>
<dbReference type="GeneTree" id="ENSGT00940000157527"/>
<dbReference type="HOGENOM" id="CLU_000288_8_3_1"/>
<dbReference type="InParanoid" id="P37173"/>
<dbReference type="OMA" id="QMPNLCK"/>
<dbReference type="OrthoDB" id="547665at2759"/>
<dbReference type="PAN-GO" id="P37173">
    <property type="GO annotations" value="12 GO annotations based on evolutionary models"/>
</dbReference>
<dbReference type="PhylomeDB" id="P37173"/>
<dbReference type="TreeFam" id="TF314724"/>
<dbReference type="BRENDA" id="2.7.10.2">
    <property type="organism ID" value="2681"/>
</dbReference>
<dbReference type="PathwayCommons" id="P37173"/>
<dbReference type="Reactome" id="R-HSA-2173788">
    <property type="pathway name" value="Downregulation of TGF-beta receptor signaling"/>
</dbReference>
<dbReference type="Reactome" id="R-HSA-2173789">
    <property type="pathway name" value="TGF-beta receptor signaling activates SMADs"/>
</dbReference>
<dbReference type="Reactome" id="R-HSA-2173791">
    <property type="pathway name" value="TGF-beta receptor signaling in EMT (epithelial to mesenchymal transition)"/>
</dbReference>
<dbReference type="Reactome" id="R-HSA-3304356">
    <property type="pathway name" value="SMAD2/3 Phosphorylation Motif Mutants in Cancer"/>
</dbReference>
<dbReference type="Reactome" id="R-HSA-3642279">
    <property type="pathway name" value="TGFBR2 MSI Frameshift Mutants in Cancer"/>
</dbReference>
<dbReference type="Reactome" id="R-HSA-3645790">
    <property type="pathway name" value="TGFBR2 Kinase Domain Mutants in Cancer"/>
</dbReference>
<dbReference type="Reactome" id="R-HSA-3656532">
    <property type="pathway name" value="TGFBR1 KD Mutants in Cancer"/>
</dbReference>
<dbReference type="Reactome" id="R-HSA-3656535">
    <property type="pathway name" value="TGFBR1 LBD Mutants in Cancer"/>
</dbReference>
<dbReference type="Reactome" id="R-HSA-5689603">
    <property type="pathway name" value="UCH proteinases"/>
</dbReference>
<dbReference type="Reactome" id="R-HSA-9839389">
    <property type="pathway name" value="TGFBR3 regulates TGF-beta signaling"/>
</dbReference>
<dbReference type="SignaLink" id="P37173"/>
<dbReference type="SIGNOR" id="P37173"/>
<dbReference type="BioGRID-ORCS" id="7048">
    <property type="hits" value="45 hits in 1213 CRISPR screens"/>
</dbReference>
<dbReference type="ChiTaRS" id="TGFBR2">
    <property type="organism name" value="human"/>
</dbReference>
<dbReference type="EvolutionaryTrace" id="P37173"/>
<dbReference type="GeneWiki" id="TGF_beta_receptor_2"/>
<dbReference type="GenomeRNAi" id="7048"/>
<dbReference type="Pharos" id="P37173">
    <property type="development level" value="Tchem"/>
</dbReference>
<dbReference type="PRO" id="PR:P37173"/>
<dbReference type="Proteomes" id="UP000005640">
    <property type="component" value="Chromosome 3"/>
</dbReference>
<dbReference type="RNAct" id="P37173">
    <property type="molecule type" value="protein"/>
</dbReference>
<dbReference type="Bgee" id="ENSG00000163513">
    <property type="expression patterns" value="Expressed in pericardium and 211 other cell types or tissues"/>
</dbReference>
<dbReference type="ExpressionAtlas" id="P37173">
    <property type="expression patterns" value="baseline and differential"/>
</dbReference>
<dbReference type="GO" id="GO:0048179">
    <property type="term" value="C:activin receptor complex"/>
    <property type="evidence" value="ECO:0000318"/>
    <property type="project" value="GO_Central"/>
</dbReference>
<dbReference type="GO" id="GO:0005901">
    <property type="term" value="C:caveola"/>
    <property type="evidence" value="ECO:0000314"/>
    <property type="project" value="BHF-UCL"/>
</dbReference>
<dbReference type="GO" id="GO:0005829">
    <property type="term" value="C:cytosol"/>
    <property type="evidence" value="ECO:0000304"/>
    <property type="project" value="Reactome"/>
</dbReference>
<dbReference type="GO" id="GO:0009897">
    <property type="term" value="C:external side of plasma membrane"/>
    <property type="evidence" value="ECO:0000314"/>
    <property type="project" value="BHF-UCL"/>
</dbReference>
<dbReference type="GO" id="GO:0005576">
    <property type="term" value="C:extracellular region"/>
    <property type="evidence" value="ECO:0007669"/>
    <property type="project" value="UniProtKB-SubCell"/>
</dbReference>
<dbReference type="GO" id="GO:0005615">
    <property type="term" value="C:extracellular space"/>
    <property type="evidence" value="ECO:0000314"/>
    <property type="project" value="UniProtKB"/>
</dbReference>
<dbReference type="GO" id="GO:0016020">
    <property type="term" value="C:membrane"/>
    <property type="evidence" value="ECO:0000314"/>
    <property type="project" value="BHF-UCL"/>
</dbReference>
<dbReference type="GO" id="GO:0045121">
    <property type="term" value="C:membrane raft"/>
    <property type="evidence" value="ECO:0000314"/>
    <property type="project" value="UniProtKB"/>
</dbReference>
<dbReference type="GO" id="GO:0016604">
    <property type="term" value="C:nuclear body"/>
    <property type="evidence" value="ECO:0000314"/>
    <property type="project" value="HPA"/>
</dbReference>
<dbReference type="GO" id="GO:0005886">
    <property type="term" value="C:plasma membrane"/>
    <property type="evidence" value="ECO:0000314"/>
    <property type="project" value="HPA"/>
</dbReference>
<dbReference type="GO" id="GO:0043235">
    <property type="term" value="C:receptor complex"/>
    <property type="evidence" value="ECO:0000314"/>
    <property type="project" value="BHF-UCL"/>
</dbReference>
<dbReference type="GO" id="GO:0070021">
    <property type="term" value="C:transforming growth factor beta ligand-receptor complex"/>
    <property type="evidence" value="ECO:0000353"/>
    <property type="project" value="ComplexPortal"/>
</dbReference>
<dbReference type="GO" id="GO:0048185">
    <property type="term" value="F:activin binding"/>
    <property type="evidence" value="ECO:0000318"/>
    <property type="project" value="GO_Central"/>
</dbReference>
<dbReference type="GO" id="GO:0016361">
    <property type="term" value="F:activin receptor activity, type I"/>
    <property type="evidence" value="ECO:0000318"/>
    <property type="project" value="GO_Central"/>
</dbReference>
<dbReference type="GO" id="GO:0005524">
    <property type="term" value="F:ATP binding"/>
    <property type="evidence" value="ECO:0007669"/>
    <property type="project" value="UniProtKB-KW"/>
</dbReference>
<dbReference type="GO" id="GO:0005539">
    <property type="term" value="F:glycosaminoglycan binding"/>
    <property type="evidence" value="ECO:0000314"/>
    <property type="project" value="BHF-UCL"/>
</dbReference>
<dbReference type="GO" id="GO:0019209">
    <property type="term" value="F:kinase activator activity"/>
    <property type="evidence" value="ECO:0007669"/>
    <property type="project" value="Ensembl"/>
</dbReference>
<dbReference type="GO" id="GO:0046872">
    <property type="term" value="F:metal ion binding"/>
    <property type="evidence" value="ECO:0007669"/>
    <property type="project" value="UniProtKB-KW"/>
</dbReference>
<dbReference type="GO" id="GO:0060090">
    <property type="term" value="F:molecular adaptor activity"/>
    <property type="evidence" value="ECO:0000269"/>
    <property type="project" value="DisProt"/>
</dbReference>
<dbReference type="GO" id="GO:0004674">
    <property type="term" value="F:protein serine/threonine kinase activity"/>
    <property type="evidence" value="ECO:0000304"/>
    <property type="project" value="Reactome"/>
</dbReference>
<dbReference type="GO" id="GO:0046332">
    <property type="term" value="F:SMAD binding"/>
    <property type="evidence" value="ECO:0000314"/>
    <property type="project" value="BHF-UCL"/>
</dbReference>
<dbReference type="GO" id="GO:0050431">
    <property type="term" value="F:transforming growth factor beta binding"/>
    <property type="evidence" value="ECO:0000314"/>
    <property type="project" value="BHF-UCL"/>
</dbReference>
<dbReference type="GO" id="GO:0005024">
    <property type="term" value="F:transforming growth factor beta receptor activity"/>
    <property type="evidence" value="ECO:0000314"/>
    <property type="project" value="BHF-UCL"/>
</dbReference>
<dbReference type="GO" id="GO:0005026">
    <property type="term" value="F:transforming growth factor beta receptor activity, type II"/>
    <property type="evidence" value="ECO:0000314"/>
    <property type="project" value="UniProt"/>
</dbReference>
<dbReference type="GO" id="GO:0004675">
    <property type="term" value="F:transmembrane receptor protein serine/threonine kinase activity"/>
    <property type="evidence" value="ECO:0000314"/>
    <property type="project" value="BHF-UCL"/>
</dbReference>
<dbReference type="GO" id="GO:0034713">
    <property type="term" value="F:type I transforming growth factor beta receptor binding"/>
    <property type="evidence" value="ECO:0000314"/>
    <property type="project" value="BHF-UCL"/>
</dbReference>
<dbReference type="GO" id="GO:0034714">
    <property type="term" value="F:type III transforming growth factor beta receptor binding"/>
    <property type="evidence" value="ECO:0000314"/>
    <property type="project" value="BHF-UCL"/>
</dbReference>
<dbReference type="GO" id="GO:0032924">
    <property type="term" value="P:activin receptor signaling pathway"/>
    <property type="evidence" value="ECO:0000318"/>
    <property type="project" value="GO_Central"/>
</dbReference>
<dbReference type="GO" id="GO:0035909">
    <property type="term" value="P:aorta morphogenesis"/>
    <property type="evidence" value="ECO:0000315"/>
    <property type="project" value="BHF-UCL"/>
</dbReference>
<dbReference type="GO" id="GO:0003180">
    <property type="term" value="P:aortic valve morphogenesis"/>
    <property type="evidence" value="ECO:0000315"/>
    <property type="project" value="BHF-UCL"/>
</dbReference>
<dbReference type="GO" id="GO:0006915">
    <property type="term" value="P:apoptotic process"/>
    <property type="evidence" value="ECO:0000314"/>
    <property type="project" value="UniProtKB"/>
</dbReference>
<dbReference type="GO" id="GO:0048844">
    <property type="term" value="P:artery morphogenesis"/>
    <property type="evidence" value="ECO:0000315"/>
    <property type="project" value="BHF-UCL"/>
</dbReference>
<dbReference type="GO" id="GO:0003181">
    <property type="term" value="P:atrioventricular valve morphogenesis"/>
    <property type="evidence" value="ECO:0000250"/>
    <property type="project" value="BHF-UCL"/>
</dbReference>
<dbReference type="GO" id="GO:0001568">
    <property type="term" value="P:blood vessel development"/>
    <property type="evidence" value="ECO:0000304"/>
    <property type="project" value="BHF-UCL"/>
</dbReference>
<dbReference type="GO" id="GO:0007420">
    <property type="term" value="P:brain development"/>
    <property type="evidence" value="ECO:0000250"/>
    <property type="project" value="BHF-UCL"/>
</dbReference>
<dbReference type="GO" id="GO:0001569">
    <property type="term" value="P:branching involved in blood vessel morphogenesis"/>
    <property type="evidence" value="ECO:0000250"/>
    <property type="project" value="BHF-UCL"/>
</dbReference>
<dbReference type="GO" id="GO:0060434">
    <property type="term" value="P:bronchus morphogenesis"/>
    <property type="evidence" value="ECO:0007669"/>
    <property type="project" value="Ensembl"/>
</dbReference>
<dbReference type="GO" id="GO:0003214">
    <property type="term" value="P:cardiac left ventricle morphogenesis"/>
    <property type="evidence" value="ECO:0000250"/>
    <property type="project" value="BHF-UCL"/>
</dbReference>
<dbReference type="GO" id="GO:0071363">
    <property type="term" value="P:cellular response to growth factor stimulus"/>
    <property type="evidence" value="ECO:0000318"/>
    <property type="project" value="GO_Central"/>
</dbReference>
<dbReference type="GO" id="GO:0048701">
    <property type="term" value="P:embryonic cranial skeleton morphogenesis"/>
    <property type="evidence" value="ECO:0000250"/>
    <property type="project" value="BHF-UCL"/>
</dbReference>
<dbReference type="GO" id="GO:0035162">
    <property type="term" value="P:embryonic hemopoiesis"/>
    <property type="evidence" value="ECO:0000250"/>
    <property type="project" value="BHF-UCL"/>
</dbReference>
<dbReference type="GO" id="GO:0003274">
    <property type="term" value="P:endocardial cushion fusion"/>
    <property type="evidence" value="ECO:0000250"/>
    <property type="project" value="BHF-UCL"/>
</dbReference>
<dbReference type="GO" id="GO:0001837">
    <property type="term" value="P:epithelial to mesenchymal transition"/>
    <property type="evidence" value="ECO:0000315"/>
    <property type="project" value="BHF-UCL"/>
</dbReference>
<dbReference type="GO" id="GO:0007369">
    <property type="term" value="P:gastrulation"/>
    <property type="evidence" value="ECO:0007669"/>
    <property type="project" value="Ensembl"/>
</dbReference>
<dbReference type="GO" id="GO:0003430">
    <property type="term" value="P:growth plate cartilage chondrocyte growth"/>
    <property type="evidence" value="ECO:0007669"/>
    <property type="project" value="Ensembl"/>
</dbReference>
<dbReference type="GO" id="GO:0007507">
    <property type="term" value="P:heart development"/>
    <property type="evidence" value="ECO:0000250"/>
    <property type="project" value="BHF-UCL"/>
</dbReference>
<dbReference type="GO" id="GO:0001947">
    <property type="term" value="P:heart looping"/>
    <property type="evidence" value="ECO:0000250"/>
    <property type="project" value="BHF-UCL"/>
</dbReference>
<dbReference type="GO" id="GO:0001701">
    <property type="term" value="P:in utero embryonic development"/>
    <property type="evidence" value="ECO:0007669"/>
    <property type="project" value="Ensembl"/>
</dbReference>
<dbReference type="GO" id="GO:1905317">
    <property type="term" value="P:inferior endocardial cushion morphogenesis"/>
    <property type="evidence" value="ECO:0000250"/>
    <property type="project" value="BHF-UCL"/>
</dbReference>
<dbReference type="GO" id="GO:0061520">
    <property type="term" value="P:Langerhans cell differentiation"/>
    <property type="evidence" value="ECO:0007669"/>
    <property type="project" value="Ensembl"/>
</dbReference>
<dbReference type="GO" id="GO:0002088">
    <property type="term" value="P:lens development in camera-type eye"/>
    <property type="evidence" value="ECO:0007669"/>
    <property type="project" value="Ensembl"/>
</dbReference>
<dbReference type="GO" id="GO:1990086">
    <property type="term" value="P:lens fiber cell apoptotic process"/>
    <property type="evidence" value="ECO:0007669"/>
    <property type="project" value="Ensembl"/>
</dbReference>
<dbReference type="GO" id="GO:0060463">
    <property type="term" value="P:lung lobe morphogenesis"/>
    <property type="evidence" value="ECO:0007669"/>
    <property type="project" value="Ensembl"/>
</dbReference>
<dbReference type="GO" id="GO:0060443">
    <property type="term" value="P:mammary gland morphogenesis"/>
    <property type="evidence" value="ECO:0007669"/>
    <property type="project" value="Ensembl"/>
</dbReference>
<dbReference type="GO" id="GO:0003149">
    <property type="term" value="P:membranous septum morphogenesis"/>
    <property type="evidence" value="ECO:0000250"/>
    <property type="project" value="BHF-UCL"/>
</dbReference>
<dbReference type="GO" id="GO:1990428">
    <property type="term" value="P:miRNA transport"/>
    <property type="evidence" value="ECO:0000250"/>
    <property type="project" value="BHF-UCL"/>
</dbReference>
<dbReference type="GO" id="GO:0043011">
    <property type="term" value="P:myeloid dendritic cell differentiation"/>
    <property type="evidence" value="ECO:0000250"/>
    <property type="project" value="BHF-UCL"/>
</dbReference>
<dbReference type="GO" id="GO:0007399">
    <property type="term" value="P:nervous system development"/>
    <property type="evidence" value="ECO:0000318"/>
    <property type="project" value="GO_Central"/>
</dbReference>
<dbReference type="GO" id="GO:0007219">
    <property type="term" value="P:Notch signaling pathway"/>
    <property type="evidence" value="ECO:0007669"/>
    <property type="project" value="Ensembl"/>
</dbReference>
<dbReference type="GO" id="GO:0003151">
    <property type="term" value="P:outflow tract morphogenesis"/>
    <property type="evidence" value="ECO:0000250"/>
    <property type="project" value="BHF-UCL"/>
</dbReference>
<dbReference type="GO" id="GO:0003148">
    <property type="term" value="P:outflow tract septum morphogenesis"/>
    <property type="evidence" value="ECO:0000250"/>
    <property type="project" value="BHF-UCL"/>
</dbReference>
<dbReference type="GO" id="GO:0045766">
    <property type="term" value="P:positive regulation of angiogenesis"/>
    <property type="evidence" value="ECO:0007669"/>
    <property type="project" value="Ensembl"/>
</dbReference>
<dbReference type="GO" id="GO:0002663">
    <property type="term" value="P:positive regulation of B cell tolerance induction"/>
    <property type="evidence" value="ECO:0000250"/>
    <property type="project" value="BHF-UCL"/>
</dbReference>
<dbReference type="GO" id="GO:2000563">
    <property type="term" value="P:positive regulation of CD4-positive, alpha-beta T cell proliferation"/>
    <property type="evidence" value="ECO:0000314"/>
    <property type="project" value="BHF-UCL"/>
</dbReference>
<dbReference type="GO" id="GO:0008284">
    <property type="term" value="P:positive regulation of cell population proliferation"/>
    <property type="evidence" value="ECO:0000304"/>
    <property type="project" value="ProtInc"/>
</dbReference>
<dbReference type="GO" id="GO:0010634">
    <property type="term" value="P:positive regulation of epithelial cell migration"/>
    <property type="evidence" value="ECO:0007669"/>
    <property type="project" value="Ensembl"/>
</dbReference>
<dbReference type="GO" id="GO:0010718">
    <property type="term" value="P:positive regulation of epithelial to mesenchymal transition"/>
    <property type="evidence" value="ECO:0000314"/>
    <property type="project" value="BHF-UCL"/>
</dbReference>
<dbReference type="GO" id="GO:1905007">
    <property type="term" value="P:positive regulation of epithelial to mesenchymal transition involved in endocardial cushion formation"/>
    <property type="evidence" value="ECO:0000250"/>
    <property type="project" value="BHF-UCL"/>
</dbReference>
<dbReference type="GO" id="GO:0002053">
    <property type="term" value="P:positive regulation of mesenchymal cell proliferation"/>
    <property type="evidence" value="ECO:0000250"/>
    <property type="project" value="BHF-UCL"/>
</dbReference>
<dbReference type="GO" id="GO:0051138">
    <property type="term" value="P:positive regulation of NK T cell differentiation"/>
    <property type="evidence" value="ECO:0000250"/>
    <property type="project" value="BHF-UCL"/>
</dbReference>
<dbReference type="GO" id="GO:2000379">
    <property type="term" value="P:positive regulation of reactive oxygen species metabolic process"/>
    <property type="evidence" value="ECO:0000315"/>
    <property type="project" value="BHF-UCL"/>
</dbReference>
<dbReference type="GO" id="GO:0060391">
    <property type="term" value="P:positive regulation of SMAD protein signal transduction"/>
    <property type="evidence" value="ECO:0000314"/>
    <property type="project" value="BHF-UCL"/>
</dbReference>
<dbReference type="GO" id="GO:0002666">
    <property type="term" value="P:positive regulation of T cell tolerance induction"/>
    <property type="evidence" value="ECO:0000250"/>
    <property type="project" value="BHF-UCL"/>
</dbReference>
<dbReference type="GO" id="GO:0002651">
    <property type="term" value="P:positive regulation of tolerance induction to self antigen"/>
    <property type="evidence" value="ECO:0000250"/>
    <property type="project" value="BHF-UCL"/>
</dbReference>
<dbReference type="GO" id="GO:0042127">
    <property type="term" value="P:regulation of cell population proliferation"/>
    <property type="evidence" value="ECO:0000250"/>
    <property type="project" value="BHF-UCL"/>
</dbReference>
<dbReference type="GO" id="GO:0010468">
    <property type="term" value="P:regulation of gene expression"/>
    <property type="evidence" value="ECO:0007669"/>
    <property type="project" value="Ensembl"/>
</dbReference>
<dbReference type="GO" id="GO:2000736">
    <property type="term" value="P:regulation of stem cell differentiation"/>
    <property type="evidence" value="ECO:0000315"/>
    <property type="project" value="BHF-UCL"/>
</dbReference>
<dbReference type="GO" id="GO:0072091">
    <property type="term" value="P:regulation of stem cell proliferation"/>
    <property type="evidence" value="ECO:0007669"/>
    <property type="project" value="Ensembl"/>
</dbReference>
<dbReference type="GO" id="GO:0070723">
    <property type="term" value="P:response to cholesterol"/>
    <property type="evidence" value="ECO:0000314"/>
    <property type="project" value="BHF-UCL"/>
</dbReference>
<dbReference type="GO" id="GO:0009410">
    <property type="term" value="P:response to xenobiotic stimulus"/>
    <property type="evidence" value="ECO:0000314"/>
    <property type="project" value="BHF-UCL"/>
</dbReference>
<dbReference type="GO" id="GO:0060021">
    <property type="term" value="P:roof of mouth development"/>
    <property type="evidence" value="ECO:0000315"/>
    <property type="project" value="BHF-UCL"/>
</dbReference>
<dbReference type="GO" id="GO:0062009">
    <property type="term" value="P:secondary palate development"/>
    <property type="evidence" value="ECO:0000250"/>
    <property type="project" value="BHF-UCL"/>
</dbReference>
<dbReference type="GO" id="GO:0060395">
    <property type="term" value="P:SMAD protein signal transduction"/>
    <property type="evidence" value="ECO:0007669"/>
    <property type="project" value="Ensembl"/>
</dbReference>
<dbReference type="GO" id="GO:0007224">
    <property type="term" value="P:smoothened signaling pathway"/>
    <property type="evidence" value="ECO:0007669"/>
    <property type="project" value="Ensembl"/>
</dbReference>
<dbReference type="GO" id="GO:0060440">
    <property type="term" value="P:trachea formation"/>
    <property type="evidence" value="ECO:0007669"/>
    <property type="project" value="Ensembl"/>
</dbReference>
<dbReference type="GO" id="GO:0007179">
    <property type="term" value="P:transforming growth factor beta receptor signaling pathway"/>
    <property type="evidence" value="ECO:0000314"/>
    <property type="project" value="BHF-UCL"/>
</dbReference>
<dbReference type="GO" id="GO:0003186">
    <property type="term" value="P:tricuspid valve morphogenesis"/>
    <property type="evidence" value="ECO:0000250"/>
    <property type="project" value="BHF-UCL"/>
</dbReference>
<dbReference type="GO" id="GO:0001570">
    <property type="term" value="P:vasculogenesis"/>
    <property type="evidence" value="ECO:0000250"/>
    <property type="project" value="BHF-UCL"/>
</dbReference>
<dbReference type="GO" id="GO:0060412">
    <property type="term" value="P:ventricular septum morphogenesis"/>
    <property type="evidence" value="ECO:0000250"/>
    <property type="project" value="BHF-UCL"/>
</dbReference>
<dbReference type="CDD" id="cd14055">
    <property type="entry name" value="STKc_TGFbR2_like"/>
    <property type="match status" value="1"/>
</dbReference>
<dbReference type="CDD" id="cd23538">
    <property type="entry name" value="TFP_LU_ECD_TGFR2"/>
    <property type="match status" value="1"/>
</dbReference>
<dbReference type="DisProt" id="DP01760"/>
<dbReference type="FunFam" id="1.10.510.10:FF:000260">
    <property type="entry name" value="TGF-beta receptor type-2"/>
    <property type="match status" value="1"/>
</dbReference>
<dbReference type="FunFam" id="2.10.60.10:FF:000009">
    <property type="entry name" value="TGF-beta receptor type-2"/>
    <property type="match status" value="1"/>
</dbReference>
<dbReference type="FunFam" id="3.30.200.20:FF:000213">
    <property type="entry name" value="TGF-beta receptor type-2"/>
    <property type="match status" value="1"/>
</dbReference>
<dbReference type="Gene3D" id="2.10.60.10">
    <property type="entry name" value="CD59"/>
    <property type="match status" value="1"/>
</dbReference>
<dbReference type="Gene3D" id="3.30.200.20">
    <property type="entry name" value="Phosphorylase Kinase, domain 1"/>
    <property type="match status" value="1"/>
</dbReference>
<dbReference type="Gene3D" id="1.10.510.10">
    <property type="entry name" value="Transferase(Phosphotransferase) domain 1"/>
    <property type="match status" value="1"/>
</dbReference>
<dbReference type="IDEAL" id="IID00414"/>
<dbReference type="InterPro" id="IPR011009">
    <property type="entry name" value="Kinase-like_dom_sf"/>
</dbReference>
<dbReference type="InterPro" id="IPR000719">
    <property type="entry name" value="Prot_kinase_dom"/>
</dbReference>
<dbReference type="InterPro" id="IPR017441">
    <property type="entry name" value="Protein_kinase_ATP_BS"/>
</dbReference>
<dbReference type="InterPro" id="IPR001245">
    <property type="entry name" value="Ser-Thr/Tyr_kinase_cat_dom"/>
</dbReference>
<dbReference type="InterPro" id="IPR008271">
    <property type="entry name" value="Ser/Thr_kinase_AS"/>
</dbReference>
<dbReference type="InterPro" id="IPR045860">
    <property type="entry name" value="Snake_toxin-like_sf"/>
</dbReference>
<dbReference type="InterPro" id="IPR000333">
    <property type="entry name" value="TGFB_receptor"/>
</dbReference>
<dbReference type="InterPro" id="IPR017194">
    <property type="entry name" value="Transform_growth_fac-b_typ-2"/>
</dbReference>
<dbReference type="InterPro" id="IPR015013">
    <property type="entry name" value="Transforming_GF_b_rcpt_2_ecto"/>
</dbReference>
<dbReference type="PANTHER" id="PTHR23255:SF55">
    <property type="entry name" value="TGF-BETA RECEPTOR TYPE-2"/>
    <property type="match status" value="1"/>
</dbReference>
<dbReference type="PANTHER" id="PTHR23255">
    <property type="entry name" value="TRANSFORMING GROWTH FACTOR-BETA RECEPTOR TYPE I AND II"/>
    <property type="match status" value="1"/>
</dbReference>
<dbReference type="Pfam" id="PF08917">
    <property type="entry name" value="ecTbetaR2"/>
    <property type="match status" value="1"/>
</dbReference>
<dbReference type="Pfam" id="PF07714">
    <property type="entry name" value="PK_Tyr_Ser-Thr"/>
    <property type="match status" value="1"/>
</dbReference>
<dbReference type="PIRSF" id="PIRSF037393">
    <property type="entry name" value="TGFRII"/>
    <property type="match status" value="1"/>
</dbReference>
<dbReference type="PRINTS" id="PR00653">
    <property type="entry name" value="ACTIVIN2R"/>
</dbReference>
<dbReference type="SMART" id="SM00220">
    <property type="entry name" value="S_TKc"/>
    <property type="match status" value="1"/>
</dbReference>
<dbReference type="SUPFAM" id="SSF56112">
    <property type="entry name" value="Protein kinase-like (PK-like)"/>
    <property type="match status" value="1"/>
</dbReference>
<dbReference type="SUPFAM" id="SSF57302">
    <property type="entry name" value="Snake toxin-like"/>
    <property type="match status" value="1"/>
</dbReference>
<dbReference type="PROSITE" id="PS00107">
    <property type="entry name" value="PROTEIN_KINASE_ATP"/>
    <property type="match status" value="1"/>
</dbReference>
<dbReference type="PROSITE" id="PS50011">
    <property type="entry name" value="PROTEIN_KINASE_DOM"/>
    <property type="match status" value="1"/>
</dbReference>
<dbReference type="PROSITE" id="PS00108">
    <property type="entry name" value="PROTEIN_KINASE_ST"/>
    <property type="match status" value="1"/>
</dbReference>
<proteinExistence type="evidence at protein level"/>